<sequence length="748" mass="84142">MVLLRVLILLLSWAAGMGGQYGNPLNKYIRHYEGLSYNVDSLHQKHQRAKRAVSHEDQFLRLDFHAHGRHFNLRMKRDTSLFSDEFKVETSNKVLDYDTSHIYTGHIYGEEGSFSHGSVIDGRFEGFIQTRGGTFYVEPAERYIKDRTLPFHSVIYHEDDINYPHKYGPQGGCADHSVFERMRKYQMTGVEEVTQIPQEEHAANGPELLRKKRTTSAEKNTCQLYIQTDHLFFKYYGTREAVIAQISSHVKAIDTIYQTTDFSGIRNISFMVKRIRINTTADEKDPTNPFRFPNIGVEKFLELNSEQNHDDYCLAYVFTDRDFDDGVLGLAWVGAPSGSSGGICEKSKLYSDGKKKSLNTGIITVQNYGSHVPPKVSHITFAHEVGHNFGSPHDSGTECTPGESKNLGQKENGNYIMYARATSGDKLNNNKFSLCSIRNISQVLEKKRNNCFVESGQPICGNGMVEQGEECDCGYSDQCKDECCFDANQPEGRKCKLKPGKQCSPSQGPCCTAQCAFKSKSEKCRDDSDCAREGICNGFTALCPASDPKPNFTDCNRHTQVCINGQCAGSICEKYGLEECTCASSDGKDDKELCHVCCMKKMDPSTCASTGSVQWSRHFSGRTITLQPGSPCNDFRGYCDVFMRCRLVDADGPLARLKKAIFSPELYENIAEWIVAHWWAVLLMGIALIMLMAGFIKICSVHTPSSNPKLPPPKPLPGTLKRRRPPQPIQQPQRQRPRESYQMGHMRR</sequence>
<name>ADA10_HUMAN</name>
<comment type="function">
    <text evidence="2 9 11 12 13 15 16 21 23 28 31 32 33 34 38 39 40">Transmembrane metalloprotease which mediates the ectodomain shedding of a myriad of transmembrane proteins, including adhesion proteins, growth factor precursors and cytokines being essential for development and tissue homeostasis (PubMed:11786905, PubMed:12475894, PubMed:20592283, PubMed:24990881, PubMed:26686862, PubMed:28600292, PubMed:31792032). Associates with six members of the tetraspanin superfamily TspanC8 which regulate its exit from the endoplasmic reticulum and its substrate selectivity (PubMed:26686862, PubMed:28600292, PubMed:31792032, PubMed:34739841, PubMed:37516108). Cleaves the membrane-bound precursor of TNF-alpha at '76-Ala-|-Val-77' to its mature soluble form. Responsible for the proteolytical release of soluble JAM3 from endothelial cells surface (PubMed:20592283). Responsible for the proteolytic release of several other cell-surface proteins, including heparin-binding epidermal growth-like factor, ephrin-A2, CD44, CDH2 and for constitutive and regulated alpha-secretase cleavage of amyloid precursor protein (APP) (PubMed:11786905, PubMed:26686862, PubMed:29224781, PubMed:34739841). Contributes to the normal cleavage of the cellular prion protein (PubMed:11477090). Involved in the cleavage of the adhesion molecule L1 at the cell surface and in released membrane vesicles, suggesting a vesicle-based protease activity (PubMed:12475894). Also controls the proteolytic processing of Notch and mediates lateral inhibition during neurogenesis (By similarity). Required for the development of type 1 transitional B cells into marginal zone B cells, probably by cleaving Notch (By similarity). Responsible for the FasL ectodomain shedding and for the generation of the remnant ADAM10-processed FasL (FasL APL) transmembrane form (PubMed:17557115). Also cleaves the ectodomain of the integral membrane proteins CORIN and ITM2B (PubMed:19114711, PubMed:21288900). Mediates the proteolytic cleavage of LAG3, leading to release the secreted form of LAG3 (By similarity). Mediates the proteolytic cleavage of IL6R and IL11RA, leading to the release of secreted forms of IL6R and IL11RA (PubMed:26876177). Enhances the cleavage of CHL1 by BACE1 (By similarity). Cleaves NRCAM (By similarity). Cleaves TREM2, resulting in shedding of the TREM2 ectodomain (PubMed:24990881). Involved in the development and maturation of glomerular and coronary vasculature (By similarity). During development of the cochlear organ of Corti, promotes pillar cell separation by forming a ternary complex with CADH1 and EPHA4 and cleaving CADH1 at adherens junctions (By similarity). May regulate the EFNA5-EPHA3 signaling (PubMed:16239146). Regulates leukocyte transmigration as a sheddase for the adherens junction protein VE-cadherin/CDH5 in endothelial cells (PubMed:28600292).</text>
</comment>
<comment type="function">
    <text evidence="22 37">(Microbial infection) Promotes the cytotoxic activity of S.aureus hly by binding to the toxin at zonula adherens and promoting formation of toxin pores.</text>
</comment>
<comment type="catalytic activity">
    <reaction evidence="9 11 12 13 15 16 21 23 31 34 35 40 44">
        <text>Endopeptidase of broad specificity.</text>
        <dbReference type="EC" id="3.4.24.81"/>
    </reaction>
</comment>
<comment type="cofactor">
    <cofactor evidence="34">
        <name>Zn(2+)</name>
        <dbReference type="ChEBI" id="CHEBI:29105"/>
    </cofactor>
    <text evidence="34">Binds 1 zinc ion per subunit.</text>
</comment>
<comment type="activity regulation">
    <text evidence="4 34">Catalytically inactive when the propeptide is intact and associated with the mature enzyme (By similarity). The disintegrin and cysteine-rich regions modulate access of substrates to exerts an inhibitory effect on the cleavage of ADAM10 substrates (PubMed:29224781).</text>
</comment>
<comment type="biophysicochemical properties">
    <kinetics>
        <KM evidence="40">22 uM for substrate (in complex with TSPAN15)</KM>
    </kinetics>
</comment>
<comment type="subunit">
    <text evidence="2 13 20 26 30 31 36 37 39 40">Forms a ternary EFNA5-EPHA3-ADAM10 complex mediating EFNA5 extracellular domain shedding by ADAM10 which regulates the EFNA5-EPHA3 complex internalization and function, the cleavage occurs in trans, with ADAM10 and its substrate being on the membranes of opposing cells (PubMed:16239146). Interacts with the clathrin adapter AP2 complex subunits AP2A1, AP2A2, AP2B1, and AP2M1; this interaction facilitates ADAM10 endocytosis from the plasma membrane during long-term potentiation in hippocampal neurons (PubMed:23676497). Forms a ternary complex composed of ADAM10, EPHA4 and CADH1; within the complex, ADAM10 cleaves CADH1 which disrupts adherens junctions (By similarity). Interacts with EPHA2 (By similarity). Interacts with NGF in a divalent cation-dependent manner (PubMed:20164177). Interacts with TSPAN14; the interaction promotes ADAM10 maturation and cell surface expression (PubMed:26668317, PubMed:26686862). Interacts with TSPAN5, TSPAN10, TSPAN14, TSPAN15, TSPAN17 and TSPAN33; these interactions regulate ADAM10 substrate specificity, endocytosis and turnover (PubMed:26668317, PubMed:26686862, PubMed:34739841, PubMed:37516108). Interacts (via extracellular domain) with TSPAN33 (via extracellular domain) and (via cytoplasmic domain) with AFDN; interaction with TSPAN33 allows the docking of ADAM10 to zonula adherens through a PDZ11-dependent interaction between TSPAN33 and PLEKHA7 while interaction with AFDN locks ADAM10 at zonula adherens (PubMed:30463011). Interacts with DLG1; this interaction recruits ADAM10 to the cell membrane during long-term depression in hippocampal neurons (PubMed:23676497). Interacts (via extracellular domain) with BACE1 (via extracellular domain) (By similarity). Interacts with FAM171A1 (PubMed:30312582).</text>
</comment>
<comment type="subunit">
    <text evidence="22 37">(Microbial infection) Interacts with S.aureus hly; this interaction is necessary for toxin pore formation, disruption of focal adhesions and S.aureus hly-mediated cytotoxicity.</text>
</comment>
<comment type="interaction">
    <interactant intactId="EBI-1536151">
        <id>O14672</id>
    </interactant>
    <interactant intactId="EBI-375543">
        <id>P00519</id>
        <label>ABL1</label>
    </interactant>
    <organismsDiffer>false</organismsDiffer>
    <experiments>2</experiments>
</comment>
<comment type="interaction">
    <interactant intactId="EBI-1536151">
        <id>O14672</id>
    </interactant>
    <interactant intactId="EBI-77613">
        <id>P05067</id>
        <label>APP</label>
    </interactant>
    <organismsDiffer>false</organismsDiffer>
    <experiments>7</experiments>
</comment>
<comment type="interaction">
    <interactant intactId="EBI-1536151">
        <id>O14672</id>
    </interactant>
    <interactant intactId="EBI-2433139">
        <id>P56817</id>
        <label>BACE1</label>
    </interactant>
    <organismsDiffer>false</organismsDiffer>
    <experiments>3</experiments>
</comment>
<comment type="interaction">
    <interactant intactId="EBI-1536151">
        <id>O14672</id>
    </interactant>
    <interactant intactId="EBI-712921">
        <id>P60033</id>
        <label>CD81</label>
    </interactant>
    <organismsDiffer>false</organismsDiffer>
    <experiments>9</experiments>
</comment>
<comment type="interaction">
    <interactant intactId="EBI-1536151">
        <id>O14672</id>
    </interactant>
    <interactant intactId="EBI-4280101">
        <id>P21926</id>
        <label>CD9</label>
    </interactant>
    <organismsDiffer>false</organismsDiffer>
    <experiments>17</experiments>
</comment>
<comment type="interaction">
    <interactant intactId="EBI-1536151">
        <id>O14672</id>
    </interactant>
    <interactant intactId="EBI-515315">
        <id>P06241</id>
        <label>FYN</label>
    </interactant>
    <organismsDiffer>false</organismsDiffer>
    <experiments>2</experiments>
</comment>
<comment type="interaction">
    <interactant intactId="EBI-1536151">
        <id>O14672</id>
    </interactant>
    <interactant intactId="EBI-2847510">
        <id>Q13588</id>
        <label>GRAP</label>
    </interactant>
    <organismsDiffer>false</organismsDiffer>
    <experiments>2</experiments>
</comment>
<comment type="interaction">
    <interactant intactId="EBI-1536151">
        <id>O14672</id>
    </interactant>
    <interactant intactId="EBI-740418">
        <id>O75791</id>
        <label>GRAP2</label>
    </interactant>
    <organismsDiffer>false</organismsDiffer>
    <experiments>3</experiments>
</comment>
<comment type="interaction">
    <interactant intactId="EBI-1536151">
        <id>O14672</id>
    </interactant>
    <interactant intactId="EBI-401755">
        <id>P62993</id>
        <label>GRB2</label>
    </interactant>
    <organismsDiffer>false</organismsDiffer>
    <experiments>5</experiments>
</comment>
<comment type="interaction">
    <interactant intactId="EBI-1536151">
        <id>O14672</id>
    </interactant>
    <interactant intactId="EBI-346340">
        <id>P08631</id>
        <label>HCK</label>
    </interactant>
    <organismsDiffer>false</organismsDiffer>
    <experiments>2</experiments>
</comment>
<comment type="interaction">
    <interactant intactId="EBI-1536151">
        <id>O14672</id>
    </interactant>
    <interactant intactId="EBI-1348">
        <id>P06239</id>
        <label>LCK</label>
    </interactant>
    <organismsDiffer>false</organismsDiffer>
    <experiments>3</experiments>
</comment>
<comment type="interaction">
    <interactant intactId="EBI-1536151">
        <id>O14672</id>
    </interactant>
    <interactant intactId="EBI-721769">
        <id>Q9BY11</id>
        <label>PACSIN1</label>
    </interactant>
    <organismsDiffer>false</organismsDiffer>
    <experiments>2</experiments>
</comment>
<comment type="interaction">
    <interactant intactId="EBI-1536151">
        <id>O14672</id>
    </interactant>
    <interactant intactId="EBI-742503">
        <id>Q9UNF0</id>
        <label>PACSIN2</label>
    </interactant>
    <organismsDiffer>false</organismsDiffer>
    <experiments>2</experiments>
</comment>
<comment type="interaction">
    <interactant intactId="EBI-1536151">
        <id>O14672</id>
    </interactant>
    <interactant intactId="EBI-77926">
        <id>Q9UKS6</id>
        <label>PACSIN3</label>
    </interactant>
    <organismsDiffer>false</organismsDiffer>
    <experiments>3</experiments>
</comment>
<comment type="interaction">
    <interactant intactId="EBI-1536151">
        <id>O14672</id>
    </interactant>
    <interactant intactId="EBI-697911">
        <id>Q99961</id>
        <label>SH3GL1</label>
    </interactant>
    <organismsDiffer>false</organismsDiffer>
    <experiments>2</experiments>
</comment>
<comment type="interaction">
    <interactant intactId="EBI-1536151">
        <id>O14672</id>
    </interactant>
    <interactant intactId="EBI-298169">
        <id>Q96RF0</id>
        <label>SNX18</label>
    </interactant>
    <organismsDiffer>false</organismsDiffer>
    <experiments>2</experiments>
</comment>
<comment type="interaction">
    <interactant intactId="EBI-1536151">
        <id>O14672</id>
    </interactant>
    <interactant intactId="EBI-621482">
        <id>P12931</id>
        <label>SRC</label>
    </interactant>
    <organismsDiffer>false</organismsDiffer>
    <experiments>3</experiments>
</comment>
<comment type="interaction">
    <interactant intactId="EBI-1536151">
        <id>O14672</id>
    </interactant>
    <interactant intactId="EBI-2466403">
        <id>O95859</id>
        <label>TSPAN12</label>
    </interactant>
    <organismsDiffer>false</organismsDiffer>
    <experiments>2</experiments>
</comment>
<comment type="interaction">
    <interactant intactId="EBI-1536151">
        <id>O14672</id>
    </interactant>
    <interactant intactId="EBI-6308913">
        <id>Q8NG11</id>
        <label>TSPAN14</label>
    </interactant>
    <organismsDiffer>false</organismsDiffer>
    <experiments>9</experiments>
</comment>
<comment type="interaction">
    <interactant intactId="EBI-1536151">
        <id>O14672</id>
    </interactant>
    <interactant intactId="EBI-7361096">
        <id>O95858</id>
        <label>TSPAN15</label>
    </interactant>
    <organismsDiffer>false</organismsDiffer>
    <experiments>11</experiments>
</comment>
<comment type="interaction">
    <interactant intactId="EBI-1536151">
        <id>O14672</id>
    </interactant>
    <interactant intactId="EBI-12045841">
        <id>Q86UF1</id>
        <label>TSPAN33</label>
    </interactant>
    <organismsDiffer>false</organismsDiffer>
    <experiments>3</experiments>
</comment>
<comment type="interaction">
    <interactant intactId="EBI-1536151">
        <id>O14672</id>
    </interactant>
    <interactant intactId="EBI-20977525">
        <id>P62079</id>
        <label>TSPAN5</label>
    </interactant>
    <organismsDiffer>false</organismsDiffer>
    <experiments>12</experiments>
</comment>
<comment type="interaction">
    <interactant intactId="EBI-1536151">
        <id>O14672</id>
    </interactant>
    <interactant intactId="EBI-515331">
        <id>P07947</id>
        <label>YES1</label>
    </interactant>
    <organismsDiffer>false</organismsDiffer>
    <experiments>2</experiments>
</comment>
<comment type="interaction">
    <interactant intactId="EBI-21222747">
        <id>PRO_0000029067</id>
    </interactant>
    <interactant intactId="EBI-712921">
        <id>P60033</id>
        <label>CD81</label>
    </interactant>
    <organismsDiffer>false</organismsDiffer>
    <experiments>2</experiments>
</comment>
<comment type="interaction">
    <interactant intactId="EBI-21222747">
        <id>PRO_0000029067</id>
    </interactant>
    <interactant intactId="EBI-2466403">
        <id>O95859</id>
        <label>TSPAN12</label>
    </interactant>
    <organismsDiffer>false</organismsDiffer>
    <experiments>2</experiments>
</comment>
<comment type="subcellular location">
    <subcellularLocation>
        <location evidence="22 26 28 31 35 37">Cell membrane</location>
        <topology evidence="43">Single-pass type I membrane protein</topology>
    </subcellularLocation>
    <subcellularLocation>
        <location evidence="12">Golgi apparatus membrane</location>
        <topology evidence="43">Single-pass type I membrane protein</topology>
    </subcellularLocation>
    <subcellularLocation>
        <location evidence="12">Cytoplasmic vesicle</location>
        <location evidence="12">Clathrin-coated vesicle</location>
    </subcellularLocation>
    <subcellularLocation>
        <location evidence="2">Cell projection</location>
        <location evidence="2">Axon</location>
    </subcellularLocation>
    <subcellularLocation>
        <location evidence="2">Cell projection</location>
        <location evidence="2">Dendrite</location>
    </subcellularLocation>
    <subcellularLocation>
        <location evidence="37">Cell junction</location>
        <location evidence="37">Adherens junction</location>
    </subcellularLocation>
    <subcellularLocation>
        <location evidence="37">Cytoplasm</location>
    </subcellularLocation>
    <text evidence="12 26 37">Is localized in the plasma membrane but is also expressed in the Golgi apparatus and in clathrin-coated vesicles derived likely from the Golgi (PubMed:12475894). During long term depression, it is recruited to the cell membrane by DLG1 (PubMed:23676497). The immature form is mainly located near cytoplasmic fibrillar structures, while the mature form is predominantly located at zonula adherens and the cell membrane (PubMed:30463011). The localization and clustering of mature ADAM10 to zonula adherens is regulated by AFDN, TSPAN33, PLEKHA7 and PDZD11 (PubMed:30463011).</text>
</comment>
<comment type="alternative products">
    <event type="alternative splicing"/>
    <isoform>
        <id>O14672-1</id>
        <name>1</name>
        <sequence type="displayed"/>
    </isoform>
    <isoform>
        <id>O14672-2</id>
        <name>2</name>
        <sequence type="described" ref="VSP_056401"/>
    </isoform>
</comment>
<comment type="tissue specificity">
    <text evidence="10 26 41">Expressed in the brain (at protein level) (PubMed:23676497). Expressed in spleen, lymph node, thymus, peripheral blood leukocyte, bone marrow, cartilage, chondrocytes and fetal liver (PubMed:11511685, PubMed:9016778).</text>
</comment>
<comment type="induction">
    <text>In osteoarthritis affected-cartilage.</text>
</comment>
<comment type="domain">
    <text evidence="3">The propeptide keeps the metalloprotease in a latent form via a cysteine switch mechanism. This mechanism may be mediated by a highly conserved cysteine (Cys-173) in the propeptide, which interacts and neutralizes the zinc-coordinating HEXGHXXGXXHD catalytic core of the metalloprotease domain. The dissociation of the cysteine from the zinc ion upon the activation-peptide release activates the enzyme.</text>
</comment>
<comment type="domain">
    <text evidence="2 4 30">The Cys-rich region C-terminal to the disintegrin domain functions as a substrate-recognition module, it recognizes the EFNA5-EPHA3 complex but not the individual proteins (By similarity). Both Cys-rich and stalk region are necessary for interaction with TSPAN5, TSPAN10, TSPAN14, TSPAN17, TSPAN33 (PubMed:26668317). Stalk region is sufficient for interaction with TSPAN15 (By similarity).</text>
</comment>
<comment type="PTM">
    <text evidence="4">The precursor is cleaved by furin and PCSK7.</text>
</comment>
<comment type="disease" evidence="25">
    <disease id="DI-03962">
        <name>Reticulate acropigmentation of Kitamura</name>
        <acronym>RAK</acronym>
        <description>A rare cutaneous pigmentation disorder characterized by reticulate, slightly depressed, sharply demarcated brown macules without hypopigmentation, affecting the dorsa of the hands and feet and appearing in the first or second decade of life. The macules gradually darken and extend to the proximal regions of the extremities. The manifestations tend to progress until middle age, after which progression of the eruptions stops. The pigmentary augmentation is found on the flexor aspects of the wrists, neck, patella and olecranon. Other features include breaks in the epidermal ridges on the palms and fingers, palmoplantar pits, occasionally plantar keratoderma, and partial alopecia.</description>
        <dbReference type="MIM" id="615537"/>
    </disease>
    <text>The disease is caused by variants affecting the gene represented in this entry.</text>
</comment>
<comment type="disease" evidence="19 27">
    <disease id="DI-04003">
        <name>Alzheimer disease 18</name>
        <acronym>AD18</acronym>
        <description>A late-onset form of Alzheimer disease. Alzheimer disease is a neurodegenerative disorder characterized by progressive dementia, loss of cognitive abilities, and deposition of fibrillar amyloid proteins as intraneuronal neurofibrillary tangles, extracellular amyloid plaques and vascular amyloid deposits. The major constituents of these plaques are neurotoxic amyloid-beta protein 40 and amyloid-beta protein 42, that are produced by the proteolysis of the transmembrane APP protein. The cytotoxic C-terminal fragments (CTFs) and the caspase-cleaved products, such as C31, are also implicated in neuronal death.</description>
        <dbReference type="MIM" id="615590"/>
    </disease>
    <text>Disease susceptibility is associated with variants affecting the gene represented in this entry.</text>
</comment>
<comment type="online information" name="Atlas of Genetics and Cytogenetics in Oncology and Haematology">
    <link uri="https://atlasgeneticsoncology.org/gene/44397/ADAM10"/>
</comment>
<organism>
    <name type="scientific">Homo sapiens</name>
    <name type="common">Human</name>
    <dbReference type="NCBI Taxonomy" id="9606"/>
    <lineage>
        <taxon>Eukaryota</taxon>
        <taxon>Metazoa</taxon>
        <taxon>Chordata</taxon>
        <taxon>Craniata</taxon>
        <taxon>Vertebrata</taxon>
        <taxon>Euteleostomi</taxon>
        <taxon>Mammalia</taxon>
        <taxon>Eutheria</taxon>
        <taxon>Euarchontoglires</taxon>
        <taxon>Primates</taxon>
        <taxon>Haplorrhini</taxon>
        <taxon>Catarrhini</taxon>
        <taxon>Hominidae</taxon>
        <taxon>Homo</taxon>
    </lineage>
</organism>
<evidence type="ECO:0000250" key="1"/>
<evidence type="ECO:0000250" key="2">
    <source>
        <dbReference type="UniProtKB" id="O35598"/>
    </source>
</evidence>
<evidence type="ECO:0000250" key="3">
    <source>
        <dbReference type="UniProtKB" id="P03956"/>
    </source>
</evidence>
<evidence type="ECO:0000250" key="4">
    <source>
        <dbReference type="UniProtKB" id="Q10741"/>
    </source>
</evidence>
<evidence type="ECO:0000255" key="5"/>
<evidence type="ECO:0000255" key="6">
    <source>
        <dbReference type="PROSITE-ProRule" id="PRU00068"/>
    </source>
</evidence>
<evidence type="ECO:0000255" key="7">
    <source>
        <dbReference type="PROSITE-ProRule" id="PRU00276"/>
    </source>
</evidence>
<evidence type="ECO:0000256" key="8">
    <source>
        <dbReference type="SAM" id="MobiDB-lite"/>
    </source>
</evidence>
<evidence type="ECO:0000269" key="9">
    <source>
    </source>
</evidence>
<evidence type="ECO:0000269" key="10">
    <source>
    </source>
</evidence>
<evidence type="ECO:0000269" key="11">
    <source>
    </source>
</evidence>
<evidence type="ECO:0000269" key="12">
    <source>
    </source>
</evidence>
<evidence type="ECO:0000269" key="13">
    <source>
    </source>
</evidence>
<evidence type="ECO:0000269" key="14">
    <source>
    </source>
</evidence>
<evidence type="ECO:0000269" key="15">
    <source>
    </source>
</evidence>
<evidence type="ECO:0000269" key="16">
    <source>
    </source>
</evidence>
<evidence type="ECO:0000269" key="17">
    <source>
    </source>
</evidence>
<evidence type="ECO:0000269" key="18">
    <source>
    </source>
</evidence>
<evidence type="ECO:0000269" key="19">
    <source>
    </source>
</evidence>
<evidence type="ECO:0000269" key="20">
    <source>
    </source>
</evidence>
<evidence type="ECO:0000269" key="21">
    <source>
    </source>
</evidence>
<evidence type="ECO:0000269" key="22">
    <source>
    </source>
</evidence>
<evidence type="ECO:0000269" key="23">
    <source>
    </source>
</evidence>
<evidence type="ECO:0000269" key="24">
    <source>
    </source>
</evidence>
<evidence type="ECO:0000269" key="25">
    <source>
    </source>
</evidence>
<evidence type="ECO:0000269" key="26">
    <source>
    </source>
</evidence>
<evidence type="ECO:0000269" key="27">
    <source>
    </source>
</evidence>
<evidence type="ECO:0000269" key="28">
    <source>
    </source>
</evidence>
<evidence type="ECO:0000269" key="29">
    <source>
    </source>
</evidence>
<evidence type="ECO:0000269" key="30">
    <source>
    </source>
</evidence>
<evidence type="ECO:0000269" key="31">
    <source>
    </source>
</evidence>
<evidence type="ECO:0000269" key="32">
    <source>
    </source>
</evidence>
<evidence type="ECO:0000269" key="33">
    <source>
    </source>
</evidence>
<evidence type="ECO:0000269" key="34">
    <source>
    </source>
</evidence>
<evidence type="ECO:0000269" key="35">
    <source>
    </source>
</evidence>
<evidence type="ECO:0000269" key="36">
    <source>
    </source>
</evidence>
<evidence type="ECO:0000269" key="37">
    <source>
    </source>
</evidence>
<evidence type="ECO:0000269" key="38">
    <source>
    </source>
</evidence>
<evidence type="ECO:0000269" key="39">
    <source>
    </source>
</evidence>
<evidence type="ECO:0000269" key="40">
    <source>
    </source>
</evidence>
<evidence type="ECO:0000269" key="41">
    <source>
    </source>
</evidence>
<evidence type="ECO:0000303" key="42">
    <source>
    </source>
</evidence>
<evidence type="ECO:0000305" key="43"/>
<evidence type="ECO:0000305" key="44">
    <source>
    </source>
</evidence>
<evidence type="ECO:0000312" key="45">
    <source>
        <dbReference type="HGNC" id="HGNC:188"/>
    </source>
</evidence>
<evidence type="ECO:0007744" key="46">
    <source>
        <dbReference type="PDB" id="6BDZ"/>
    </source>
</evidence>
<evidence type="ECO:0007744" key="47">
    <source>
        <dbReference type="PDB" id="6BE6"/>
    </source>
</evidence>
<evidence type="ECO:0007744" key="48">
    <source>
        <dbReference type="PDB" id="8ESV"/>
    </source>
</evidence>
<evidence type="ECO:0007744" key="49">
    <source>
    </source>
</evidence>
<evidence type="ECO:0007744" key="50">
    <source>
    </source>
</evidence>
<evidence type="ECO:0007829" key="51">
    <source>
        <dbReference type="PDB" id="6BDZ"/>
    </source>
</evidence>
<evidence type="ECO:0007829" key="52">
    <source>
        <dbReference type="PDB" id="6BE6"/>
    </source>
</evidence>
<evidence type="ECO:0007829" key="53">
    <source>
        <dbReference type="PDB" id="8ESV"/>
    </source>
</evidence>
<proteinExistence type="evidence at protein level"/>
<feature type="signal peptide" evidence="5">
    <location>
        <begin position="1"/>
        <end position="19"/>
    </location>
</feature>
<feature type="propeptide" id="PRO_0000029066" evidence="4">
    <location>
        <begin position="20"/>
        <end position="213"/>
    </location>
</feature>
<feature type="chain" id="PRO_0000029067" description="Disintegrin and metalloproteinase domain-containing protein 10">
    <location>
        <begin position="214"/>
        <end position="748"/>
    </location>
</feature>
<feature type="topological domain" description="Extracellular" evidence="5">
    <location>
        <begin position="20"/>
        <end position="672"/>
    </location>
</feature>
<feature type="transmembrane region" description="Helical" evidence="5">
    <location>
        <begin position="673"/>
        <end position="693"/>
    </location>
</feature>
<feature type="topological domain" description="Cytoplasmic" evidence="5">
    <location>
        <begin position="694"/>
        <end position="748"/>
    </location>
</feature>
<feature type="domain" description="Peptidase M12B" evidence="7">
    <location>
        <begin position="220"/>
        <end position="456"/>
    </location>
</feature>
<feature type="domain" description="Disintegrin" evidence="6">
    <location>
        <begin position="457"/>
        <end position="551"/>
    </location>
</feature>
<feature type="region of interest" description="Disordered" evidence="8">
    <location>
        <begin position="704"/>
        <end position="748"/>
    </location>
</feature>
<feature type="region of interest" description="Interaction with AP2A1, AP2A2 and AP2M1" evidence="2">
    <location>
        <begin position="734"/>
        <end position="748"/>
    </location>
</feature>
<feature type="short sequence motif" description="Cysteine switch" evidence="1">
    <location>
        <begin position="171"/>
        <end position="178"/>
    </location>
</feature>
<feature type="short sequence motif" description="SH3-binding" evidence="5">
    <location>
        <begin position="708"/>
        <end position="715"/>
    </location>
</feature>
<feature type="short sequence motif" description="SH3-binding" evidence="5">
    <location>
        <begin position="722"/>
        <end position="728"/>
    </location>
</feature>
<feature type="active site" evidence="34 35">
    <location>
        <position position="384"/>
    </location>
</feature>
<feature type="binding site" description="in inhibited form" evidence="3">
    <location>
        <position position="173"/>
    </location>
    <ligand>
        <name>Zn(2+)</name>
        <dbReference type="ChEBI" id="CHEBI:29105"/>
        <note>catalytic</note>
    </ligand>
</feature>
<feature type="binding site" evidence="27 34 40 46 47 48">
    <location>
        <position position="383"/>
    </location>
    <ligand>
        <name>Zn(2+)</name>
        <dbReference type="ChEBI" id="CHEBI:29105"/>
        <note>catalytic</note>
    </ligand>
</feature>
<feature type="binding site" evidence="34 40 47 48">
    <location>
        <position position="387"/>
    </location>
    <ligand>
        <name>Zn(2+)</name>
        <dbReference type="ChEBI" id="CHEBI:29105"/>
        <note>catalytic</note>
    </ligand>
</feature>
<feature type="binding site" evidence="27 34 40 46 47 48">
    <location>
        <position position="393"/>
    </location>
    <ligand>
        <name>Zn(2+)</name>
        <dbReference type="ChEBI" id="CHEBI:29105"/>
        <note>catalytic</note>
    </ligand>
</feature>
<feature type="site" description="Cleavage; by furin and PCSK7" evidence="4">
    <location>
        <begin position="213"/>
        <end position="214"/>
    </location>
</feature>
<feature type="modified residue" description="Phosphothreonine; by FAM20C" evidence="29 49 50">
    <location>
        <position position="719"/>
    </location>
</feature>
<feature type="glycosylation site" description="N-linked (GlcNAc...) asparagine" evidence="5">
    <location>
        <position position="267"/>
    </location>
</feature>
<feature type="glycosylation site" description="N-linked (GlcNAc...) asparagine" evidence="14 17 18 34 46 47">
    <location>
        <position position="278"/>
    </location>
</feature>
<feature type="glycosylation site" description="N-linked (GlcNAc...) asparagine" evidence="5">
    <location>
        <position position="439"/>
    </location>
</feature>
<feature type="glycosylation site" description="N-linked (GlcNAc...) asparagine" evidence="5">
    <location>
        <position position="551"/>
    </location>
</feature>
<feature type="disulfide bond" evidence="34 40 46 47 48">
    <location>
        <begin position="222"/>
        <end position="313"/>
    </location>
</feature>
<feature type="disulfide bond" evidence="34 40 46 47 48">
    <location>
        <begin position="344"/>
        <end position="451"/>
    </location>
</feature>
<feature type="disulfide bond" evidence="34 40 46 47 48">
    <location>
        <begin position="399"/>
        <end position="435"/>
    </location>
</feature>
<feature type="disulfide bond" evidence="34 40 46 47 48">
    <location>
        <begin position="460"/>
        <end position="495"/>
    </location>
</feature>
<feature type="disulfide bond" evidence="34 40 46 47 48">
    <location>
        <begin position="471"/>
        <end position="484"/>
    </location>
</feature>
<feature type="disulfide bond" evidence="34 40 46 47 48">
    <location>
        <begin position="473"/>
        <end position="479"/>
    </location>
</feature>
<feature type="disulfide bond" evidence="34 40 46 47 48">
    <location>
        <begin position="483"/>
        <end position="515"/>
    </location>
</feature>
<feature type="disulfide bond" evidence="34 40 46 47 48">
    <location>
        <begin position="503"/>
        <end position="511"/>
    </location>
</feature>
<feature type="disulfide bond" evidence="34 40 46 47 48">
    <location>
        <begin position="510"/>
        <end position="536"/>
    </location>
</feature>
<feature type="disulfide bond" evidence="34 40 46 47 48">
    <location>
        <begin position="524"/>
        <end position="543"/>
    </location>
</feature>
<feature type="disulfide bond" evidence="34 40 46 47 48">
    <location>
        <begin position="530"/>
        <end position="562"/>
    </location>
</feature>
<feature type="disulfide bond" evidence="34 40 46 47 48">
    <location>
        <begin position="555"/>
        <end position="567"/>
    </location>
</feature>
<feature type="disulfide bond" evidence="34 40 46 47 48">
    <location>
        <begin position="572"/>
        <end position="598"/>
    </location>
</feature>
<feature type="disulfide bond" evidence="34 40 46 47 48">
    <location>
        <begin position="580"/>
        <end position="607"/>
    </location>
</feature>
<feature type="disulfide bond" evidence="34 40 46 47 48">
    <location>
        <begin position="582"/>
        <end position="597"/>
    </location>
</feature>
<feature type="disulfide bond" evidence="34 40 46 47 48">
    <location>
        <begin position="594"/>
        <end position="639"/>
    </location>
</feature>
<feature type="disulfide bond" evidence="34 46 47">
    <location>
        <begin position="632"/>
        <end position="645"/>
    </location>
</feature>
<feature type="splice variant" id="VSP_056401" description="In isoform 2." evidence="42">
    <location>
        <begin position="19"/>
        <end position="319"/>
    </location>
</feature>
<feature type="sequence variant" id="VAR_070907" description="In RAK; dbSNP:rs483352912." evidence="25">
    <original>P</original>
    <variation>S</variation>
    <location>
        <position position="139"/>
    </location>
</feature>
<feature type="sequence variant" id="VAR_070908" description="In AD18; associated with disease susceptibility; significantly attenuates alpha-secretase activity of the enzyme; shifts APP processing toward beta-secretase-mediated cleavage resulting in enhanced amyloid-beta plaque load and reactive gliosis; dbSNP:rs61751103." evidence="19 27">
    <original>Q</original>
    <variation>H</variation>
    <location>
        <position position="170"/>
    </location>
</feature>
<feature type="sequence variant" id="VAR_066309" description="In a cutaneous metastatic melanoma sample; somatic mutation; dbSNP:rs267604273." evidence="24">
    <original>H</original>
    <variation>Y</variation>
    <location>
        <position position="176"/>
    </location>
</feature>
<feature type="sequence variant" id="VAR_070909" description="In AD18; associated with disease susceptibility; significantly attenuates alpha-secretase activity of the enzyme; shifts APP processing toward beta-secretase-mediated cleavage resulting in enhanced amyloid-beta plaque load and reactive gliosis; dbSNP:rs145518263." evidence="19 27">
    <original>R</original>
    <variation>G</variation>
    <location>
        <position position="181"/>
    </location>
</feature>
<feature type="sequence variant" id="VAR_070910" description="In RAK; dbSNP:rs483352916." evidence="25">
    <original>C</original>
    <variation>Y</variation>
    <location>
        <position position="524"/>
    </location>
</feature>
<feature type="mutagenesis site" description="Loss of proteolytic activity. Abrogates APP cleavage. Reduces Notch signaling." evidence="34 35">
    <original>E</original>
    <variation>A</variation>
    <location>
        <position position="384"/>
    </location>
</feature>
<feature type="mutagenesis site" description="Strongly reduces interaction and ADAM10 maturation." evidence="40">
    <original>YCDVFMRCR</original>
    <variation>ACDVFMRCA</variation>
    <location>
        <begin position="638"/>
        <end position="646"/>
    </location>
</feature>
<feature type="mutagenesis site" description="Strongly reduces interaction and prevents ADAM10 maturation." evidence="40">
    <original>YCDVFMRCR</original>
    <variation>ECDVFMRCE</variation>
    <location>
        <begin position="638"/>
        <end position="646"/>
    </location>
</feature>
<feature type="mutagenesis site" description="Strongly reduces interaction and prevents ADAM10 maturation." evidence="40">
    <original>PLAR</original>
    <variation>AAAA</variation>
    <location>
        <begin position="653"/>
        <end position="656"/>
    </location>
</feature>
<feature type="sequence conflict" description="In Ref. 2; CAA88463." evidence="43" ref="2">
    <original>N</original>
    <variation>SERLKLRLRKLMSLELWTSCCLPCALLLHSWKKAVNSHCLYFKDFWGFSEIY</variation>
    <location>
        <position position="162"/>
    </location>
</feature>
<feature type="sequence conflict" description="In Ref. 2; CAA88463." evidence="43" ref="2">
    <original>K</original>
    <variation>R</variation>
    <location>
        <position position="212"/>
    </location>
</feature>
<feature type="sequence conflict" description="In Ref. 2; CAA88463." evidence="43" ref="2">
    <original>G</original>
    <variation>S</variation>
    <location>
        <position position="296"/>
    </location>
</feature>
<feature type="strand" evidence="52">
    <location>
        <begin position="219"/>
        <end position="228"/>
    </location>
</feature>
<feature type="helix" evidence="52">
    <location>
        <begin position="230"/>
        <end position="236"/>
    </location>
</feature>
<feature type="helix" evidence="52">
    <location>
        <begin position="239"/>
        <end position="258"/>
    </location>
</feature>
<feature type="strand" evidence="52">
    <location>
        <begin position="269"/>
        <end position="277"/>
    </location>
</feature>
<feature type="helix" evidence="52">
    <location>
        <begin position="280"/>
        <end position="284"/>
    </location>
</feature>
<feature type="helix" evidence="53">
    <location>
        <begin position="289"/>
        <end position="291"/>
    </location>
</feature>
<feature type="helix" evidence="52">
    <location>
        <begin position="297"/>
        <end position="305"/>
    </location>
</feature>
<feature type="strand" evidence="52">
    <location>
        <begin position="313"/>
        <end position="322"/>
    </location>
</feature>
<feature type="helix" evidence="52">
    <location>
        <begin position="324"/>
        <end position="326"/>
    </location>
</feature>
<feature type="strand" evidence="52">
    <location>
        <begin position="329"/>
        <end position="331"/>
    </location>
</feature>
<feature type="strand" evidence="52">
    <location>
        <begin position="336"/>
        <end position="338"/>
    </location>
</feature>
<feature type="strand" evidence="52">
    <location>
        <begin position="348"/>
        <end position="350"/>
    </location>
</feature>
<feature type="strand" evidence="52">
    <location>
        <begin position="359"/>
        <end position="367"/>
    </location>
</feature>
<feature type="helix" evidence="52">
    <location>
        <begin position="374"/>
        <end position="388"/>
    </location>
</feature>
<feature type="turn" evidence="52">
    <location>
        <begin position="397"/>
        <end position="399"/>
    </location>
</feature>
<feature type="helix" evidence="52">
    <location>
        <begin position="401"/>
        <end position="403"/>
    </location>
</feature>
<feature type="helix" evidence="52">
    <location>
        <begin position="407"/>
        <end position="411"/>
    </location>
</feature>
<feature type="helix" evidence="52">
    <location>
        <begin position="428"/>
        <end position="430"/>
    </location>
</feature>
<feature type="helix" evidence="52">
    <location>
        <begin position="434"/>
        <end position="447"/>
    </location>
</feature>
<feature type="helix" evidence="52">
    <location>
        <begin position="448"/>
        <end position="450"/>
    </location>
</feature>
<feature type="strand" evidence="52">
    <location>
        <begin position="462"/>
        <end position="464"/>
    </location>
</feature>
<feature type="turn" evidence="52">
    <location>
        <begin position="476"/>
        <end position="478"/>
    </location>
</feature>
<feature type="strand" evidence="53">
    <location>
        <begin position="482"/>
        <end position="484"/>
    </location>
</feature>
<feature type="turn" evidence="52">
    <location>
        <begin position="491"/>
        <end position="495"/>
    </location>
</feature>
<feature type="turn" evidence="52">
    <location>
        <begin position="505"/>
        <end position="507"/>
    </location>
</feature>
<feature type="strand" evidence="52">
    <location>
        <begin position="509"/>
        <end position="511"/>
    </location>
</feature>
<feature type="strand" evidence="53">
    <location>
        <begin position="515"/>
        <end position="517"/>
    </location>
</feature>
<feature type="strand" evidence="52">
    <location>
        <begin position="523"/>
        <end position="525"/>
    </location>
</feature>
<feature type="strand" evidence="52">
    <location>
        <begin position="529"/>
        <end position="531"/>
    </location>
</feature>
<feature type="strand" evidence="51">
    <location>
        <begin position="553"/>
        <end position="555"/>
    </location>
</feature>
<feature type="turn" evidence="52">
    <location>
        <begin position="556"/>
        <end position="559"/>
    </location>
</feature>
<feature type="strand" evidence="52">
    <location>
        <begin position="560"/>
        <end position="563"/>
    </location>
</feature>
<feature type="strand" evidence="52">
    <location>
        <begin position="566"/>
        <end position="569"/>
    </location>
</feature>
<feature type="helix" evidence="52">
    <location>
        <begin position="571"/>
        <end position="575"/>
    </location>
</feature>
<feature type="strand" evidence="52">
    <location>
        <begin position="577"/>
        <end position="580"/>
    </location>
</feature>
<feature type="helix" evidence="53">
    <location>
        <begin position="591"/>
        <end position="593"/>
    </location>
</feature>
<feature type="strand" evidence="52">
    <location>
        <begin position="597"/>
        <end position="600"/>
    </location>
</feature>
<feature type="helix" evidence="52">
    <location>
        <begin position="604"/>
        <end position="606"/>
    </location>
</feature>
<feature type="helix" evidence="52">
    <location>
        <begin position="614"/>
        <end position="617"/>
    </location>
</feature>
<feature type="strand" evidence="51">
    <location>
        <begin position="630"/>
        <end position="632"/>
    </location>
</feature>
<feature type="turn" evidence="52">
    <location>
        <begin position="633"/>
        <end position="636"/>
    </location>
</feature>
<feature type="strand" evidence="52">
    <location>
        <begin position="637"/>
        <end position="639"/>
    </location>
</feature>
<feature type="strand" evidence="52">
    <location>
        <begin position="645"/>
        <end position="647"/>
    </location>
</feature>
<feature type="helix" evidence="53">
    <location>
        <begin position="653"/>
        <end position="662"/>
    </location>
</feature>
<feature type="helix" evidence="53">
    <location>
        <begin position="665"/>
        <end position="669"/>
    </location>
</feature>
<gene>
    <name evidence="45" type="primary">ADAM10</name>
    <name type="synonym">KUZ</name>
    <name type="synonym">MADM</name>
</gene>
<reference key="1">
    <citation type="journal article" date="1997" name="J. Biol. Chem.">
        <title>Identification and characterization of a pro-tumor necrosis factor-alpha-processing enzyme from the ADAM family of zinc metalloproteases.</title>
        <authorList>
            <person name="Rosendahl M.S."/>
            <person name="Ko S.C."/>
            <person name="Long D.L."/>
            <person name="Brewer M.T."/>
            <person name="Rosenzweig B."/>
            <person name="Hedl E."/>
            <person name="Anderson L."/>
            <person name="Pyle S.M."/>
            <person name="Moreland J."/>
            <person name="Meyers M.A."/>
            <person name="Kohno T."/>
            <person name="Lyons D."/>
            <person name="Lichenstein H.S."/>
        </authorList>
    </citation>
    <scope>NUCLEOTIDE SEQUENCE [MRNA] (ISOFORM 1)</scope>
    <scope>PROTEIN SEQUENCE OF 216-237</scope>
</reference>
<reference key="2">
    <citation type="journal article" date="1996" name="Biochem. J.">
        <title>Molecular cloning of MADM: a catalytically active mammalian disintegrin-metalloprotease expressed in various cell types.</title>
        <authorList>
            <person name="Howard L."/>
            <person name="Mitchell S."/>
            <person name="Lu X."/>
            <person name="Griffiths S."/>
            <person name="Glynn P."/>
        </authorList>
    </citation>
    <scope>NUCLEOTIDE SEQUENCE [MRNA] OF 109-748 (ISOFORM 1)</scope>
</reference>
<reference key="3">
    <citation type="journal article" date="2006" name="Nature">
        <title>Analysis of the DNA sequence and duplication history of human chromosome 15.</title>
        <authorList>
            <person name="Zody M.C."/>
            <person name="Garber M."/>
            <person name="Sharpe T."/>
            <person name="Young S.K."/>
            <person name="Rowen L."/>
            <person name="O'Neill K."/>
            <person name="Whittaker C.A."/>
            <person name="Kamal M."/>
            <person name="Chang J.L."/>
            <person name="Cuomo C.A."/>
            <person name="Dewar K."/>
            <person name="FitzGerald M.G."/>
            <person name="Kodira C.D."/>
            <person name="Madan A."/>
            <person name="Qin S."/>
            <person name="Yang X."/>
            <person name="Abbasi N."/>
            <person name="Abouelleil A."/>
            <person name="Arachchi H.M."/>
            <person name="Baradarani L."/>
            <person name="Birditt B."/>
            <person name="Bloom S."/>
            <person name="Bloom T."/>
            <person name="Borowsky M.L."/>
            <person name="Burke J."/>
            <person name="Butler J."/>
            <person name="Cook A."/>
            <person name="DeArellano K."/>
            <person name="DeCaprio D."/>
            <person name="Dorris L. III"/>
            <person name="Dors M."/>
            <person name="Eichler E.E."/>
            <person name="Engels R."/>
            <person name="Fahey J."/>
            <person name="Fleetwood P."/>
            <person name="Friedman C."/>
            <person name="Gearin G."/>
            <person name="Hall J.L."/>
            <person name="Hensley G."/>
            <person name="Johnson E."/>
            <person name="Jones C."/>
            <person name="Kamat A."/>
            <person name="Kaur A."/>
            <person name="Locke D.P."/>
            <person name="Madan A."/>
            <person name="Munson G."/>
            <person name="Jaffe D.B."/>
            <person name="Lui A."/>
            <person name="Macdonald P."/>
            <person name="Mauceli E."/>
            <person name="Naylor J.W."/>
            <person name="Nesbitt R."/>
            <person name="Nicol R."/>
            <person name="O'Leary S.B."/>
            <person name="Ratcliffe A."/>
            <person name="Rounsley S."/>
            <person name="She X."/>
            <person name="Sneddon K.M.B."/>
            <person name="Stewart S."/>
            <person name="Sougnez C."/>
            <person name="Stone S.M."/>
            <person name="Topham K."/>
            <person name="Vincent D."/>
            <person name="Wang S."/>
            <person name="Zimmer A.R."/>
            <person name="Birren B.W."/>
            <person name="Hood L."/>
            <person name="Lander E.S."/>
            <person name="Nusbaum C."/>
        </authorList>
    </citation>
    <scope>NUCLEOTIDE SEQUENCE [LARGE SCALE GENOMIC DNA]</scope>
</reference>
<reference key="4">
    <citation type="journal article" date="2004" name="Nat. Genet.">
        <title>Complete sequencing and characterization of 21,243 full-length human cDNAs.</title>
        <authorList>
            <person name="Ota T."/>
            <person name="Suzuki Y."/>
            <person name="Nishikawa T."/>
            <person name="Otsuki T."/>
            <person name="Sugiyama T."/>
            <person name="Irie R."/>
            <person name="Wakamatsu A."/>
            <person name="Hayashi K."/>
            <person name="Sato H."/>
            <person name="Nagai K."/>
            <person name="Kimura K."/>
            <person name="Makita H."/>
            <person name="Sekine M."/>
            <person name="Obayashi M."/>
            <person name="Nishi T."/>
            <person name="Shibahara T."/>
            <person name="Tanaka T."/>
            <person name="Ishii S."/>
            <person name="Yamamoto J."/>
            <person name="Saito K."/>
            <person name="Kawai Y."/>
            <person name="Isono Y."/>
            <person name="Nakamura Y."/>
            <person name="Nagahari K."/>
            <person name="Murakami K."/>
            <person name="Yasuda T."/>
            <person name="Iwayanagi T."/>
            <person name="Wagatsuma M."/>
            <person name="Shiratori A."/>
            <person name="Sudo H."/>
            <person name="Hosoiri T."/>
            <person name="Kaku Y."/>
            <person name="Kodaira H."/>
            <person name="Kondo H."/>
            <person name="Sugawara M."/>
            <person name="Takahashi M."/>
            <person name="Kanda K."/>
            <person name="Yokoi T."/>
            <person name="Furuya T."/>
            <person name="Kikkawa E."/>
            <person name="Omura Y."/>
            <person name="Abe K."/>
            <person name="Kamihara K."/>
            <person name="Katsuta N."/>
            <person name="Sato K."/>
            <person name="Tanikawa M."/>
            <person name="Yamazaki M."/>
            <person name="Ninomiya K."/>
            <person name="Ishibashi T."/>
            <person name="Yamashita H."/>
            <person name="Murakawa K."/>
            <person name="Fujimori K."/>
            <person name="Tanai H."/>
            <person name="Kimata M."/>
            <person name="Watanabe M."/>
            <person name="Hiraoka S."/>
            <person name="Chiba Y."/>
            <person name="Ishida S."/>
            <person name="Ono Y."/>
            <person name="Takiguchi S."/>
            <person name="Watanabe S."/>
            <person name="Yosida M."/>
            <person name="Hotuta T."/>
            <person name="Kusano J."/>
            <person name="Kanehori K."/>
            <person name="Takahashi-Fujii A."/>
            <person name="Hara H."/>
            <person name="Tanase T.-O."/>
            <person name="Nomura Y."/>
            <person name="Togiya S."/>
            <person name="Komai F."/>
            <person name="Hara R."/>
            <person name="Takeuchi K."/>
            <person name="Arita M."/>
            <person name="Imose N."/>
            <person name="Musashino K."/>
            <person name="Yuuki H."/>
            <person name="Oshima A."/>
            <person name="Sasaki N."/>
            <person name="Aotsuka S."/>
            <person name="Yoshikawa Y."/>
            <person name="Matsunawa H."/>
            <person name="Ichihara T."/>
            <person name="Shiohata N."/>
            <person name="Sano S."/>
            <person name="Moriya S."/>
            <person name="Momiyama H."/>
            <person name="Satoh N."/>
            <person name="Takami S."/>
            <person name="Terashima Y."/>
            <person name="Suzuki O."/>
            <person name="Nakagawa S."/>
            <person name="Senoh A."/>
            <person name="Mizoguchi H."/>
            <person name="Goto Y."/>
            <person name="Shimizu F."/>
            <person name="Wakebe H."/>
            <person name="Hishigaki H."/>
            <person name="Watanabe T."/>
            <person name="Sugiyama A."/>
            <person name="Takemoto M."/>
            <person name="Kawakami B."/>
            <person name="Yamazaki M."/>
            <person name="Watanabe K."/>
            <person name="Kumagai A."/>
            <person name="Itakura S."/>
            <person name="Fukuzumi Y."/>
            <person name="Fujimori Y."/>
            <person name="Komiyama M."/>
            <person name="Tashiro H."/>
            <person name="Tanigami A."/>
            <person name="Fujiwara T."/>
            <person name="Ono T."/>
            <person name="Yamada K."/>
            <person name="Fujii Y."/>
            <person name="Ozaki K."/>
            <person name="Hirao M."/>
            <person name="Ohmori Y."/>
            <person name="Kawabata A."/>
            <person name="Hikiji T."/>
            <person name="Kobatake N."/>
            <person name="Inagaki H."/>
            <person name="Ikema Y."/>
            <person name="Okamoto S."/>
            <person name="Okitani R."/>
            <person name="Kawakami T."/>
            <person name="Noguchi S."/>
            <person name="Itoh T."/>
            <person name="Shigeta K."/>
            <person name="Senba T."/>
            <person name="Matsumura K."/>
            <person name="Nakajima Y."/>
            <person name="Mizuno T."/>
            <person name="Morinaga M."/>
            <person name="Sasaki M."/>
            <person name="Togashi T."/>
            <person name="Oyama M."/>
            <person name="Hata H."/>
            <person name="Watanabe M."/>
            <person name="Komatsu T."/>
            <person name="Mizushima-Sugano J."/>
            <person name="Satoh T."/>
            <person name="Shirai Y."/>
            <person name="Takahashi Y."/>
            <person name="Nakagawa K."/>
            <person name="Okumura K."/>
            <person name="Nagase T."/>
            <person name="Nomura N."/>
            <person name="Kikuchi H."/>
            <person name="Masuho Y."/>
            <person name="Yamashita R."/>
            <person name="Nakai K."/>
            <person name="Yada T."/>
            <person name="Nakamura Y."/>
            <person name="Ohara O."/>
            <person name="Isogai T."/>
            <person name="Sugano S."/>
        </authorList>
    </citation>
    <scope>NUCLEOTIDE SEQUENCE [LARGE SCALE MRNA] (ISOFORM 2)</scope>
    <source>
        <tissue>Placenta</tissue>
    </source>
</reference>
<reference key="5">
    <citation type="journal article" date="1997" name="Biochem. Biophys. Res. Commun.">
        <title>Expression of members of a novel membrane linked metalloproteinase family (ADAM) in human articular chondrocytes.</title>
        <authorList>
            <person name="McKie N."/>
            <person name="Edwards T."/>
            <person name="Dallas D.J."/>
            <person name="Houghton A."/>
            <person name="Stringer B."/>
            <person name="Graham R."/>
            <person name="Russell G."/>
            <person name="Croucher P.I."/>
        </authorList>
    </citation>
    <scope>TISSUE SPECIFICITY</scope>
</reference>
<reference key="6">
    <citation type="journal article" date="2003" name="FASEB J.">
        <title>ADAM10-mediated cleavage of L1 adhesion molecule at the cell surface and in released membrane vesicles.</title>
        <authorList>
            <person name="Gutwein P."/>
            <person name="Mechtersheimer S."/>
            <person name="Riedle S."/>
            <person name="Stoeck A."/>
            <person name="Gast D."/>
            <person name="Joumaa S."/>
            <person name="Zentgraf H."/>
            <person name="Fogel M."/>
            <person name="Altevogt P."/>
        </authorList>
    </citation>
    <scope>FUNCTION</scope>
    <scope>CATALYTIC ACTIVITY</scope>
    <scope>SUBCELLULAR LOCATION</scope>
</reference>
<reference key="7">
    <citation type="journal article" date="2001" name="J. Biol. Chem.">
        <title>The disintegrins ADAM10 and TACE contribute to the constitutive and phorbol ester-regulated normal cleavage of the cellular prion protein.</title>
        <authorList>
            <person name="Vincent B."/>
            <person name="Paitel E."/>
            <person name="Saftig P."/>
            <person name="Frobert Y."/>
            <person name="Hartmann D."/>
            <person name="De Strooper B."/>
            <person name="Grassi J."/>
            <person name="Lopez-Perez E."/>
            <person name="Checler F."/>
        </authorList>
    </citation>
    <scope>FUNCTION</scope>
    <scope>CATALYTIC ACTIVITY</scope>
</reference>
<reference key="8">
    <citation type="journal article" date="2001" name="J. Histochem. Cytochem.">
        <title>ADAM-10 protein is present in human articular cartilage primarily in the membrane-bound form and is upregulated in osteoarthritis and in response to IL-1alpha in bovine nasal cartilage.</title>
        <authorList>
            <person name="Chubinskaya S."/>
            <person name="Mikhail R."/>
            <person name="Deutsch A."/>
            <person name="Tindal M.H."/>
        </authorList>
    </citation>
    <scope>TISSUE SPECIFICITY</scope>
</reference>
<reference key="9">
    <citation type="journal article" date="2002" name="Nat. Med.">
        <title>Platelet-activating factor receptor and ADAM10 mediate responses to Staphylococcus aureus in epithelial cells.</title>
        <authorList>
            <person name="Lemjabbar H."/>
            <person name="Basbaum C."/>
        </authorList>
    </citation>
    <scope>FUNCTION</scope>
</reference>
<reference key="10">
    <citation type="journal article" date="2005" name="Cell">
        <title>Adam meets Eph: an ADAM substrate recognition module acts as a molecular switch for ephrin cleavage in trans.</title>
        <authorList>
            <person name="Janes P.W."/>
            <person name="Saha N."/>
            <person name="Barton W.A."/>
            <person name="Kolev M.V."/>
            <person name="Wimmer-Kleikamp S.H."/>
            <person name="Nievergall E."/>
            <person name="Blobel C.P."/>
            <person name="Himanen J.P."/>
            <person name="Lackmann M."/>
            <person name="Nikolov D.B."/>
        </authorList>
    </citation>
    <scope>IDENTIFICATION IN A COMPLEX WITH EFNA5 AND EPHA3</scope>
    <scope>FUNCTION IN EFNA5-EPHA3 SIGNALING</scope>
    <scope>CATALYTIC ACTIVITY</scope>
</reference>
<reference key="11">
    <citation type="journal article" date="2006" name="Mol. Cell. Proteomics">
        <title>Elucidation of N-glycosylation sites on human platelet proteins: a glycoproteomic approach.</title>
        <authorList>
            <person name="Lewandrowski U."/>
            <person name="Moebius J."/>
            <person name="Walter U."/>
            <person name="Sickmann A."/>
        </authorList>
    </citation>
    <scope>GLYCOSYLATION [LARGE SCALE ANALYSIS] AT ASN-278</scope>
    <source>
        <tissue>Platelet</tissue>
    </source>
</reference>
<reference key="12">
    <citation type="journal article" date="2007" name="Cell Death Differ.">
        <title>The Fas ligand intracellular domain is released by ADAM10 and SPPL2a cleavage in T-cells.</title>
        <authorList>
            <person name="Kirkin V."/>
            <person name="Cahuzac N."/>
            <person name="Guardiola-Serrano F."/>
            <person name="Huault S."/>
            <person name="Luckerath K."/>
            <person name="Friedmann E."/>
            <person name="Novac N."/>
            <person name="Wels W.S."/>
            <person name="Martoglio B."/>
            <person name="Hueber A.O."/>
            <person name="Zornig M."/>
        </authorList>
    </citation>
    <scope>FUNCTION IN CLEAVAGE OF FASLG</scope>
</reference>
<reference key="13">
    <citation type="journal article" date="2009" name="J. Biol. Chem.">
        <title>Substrate requirements for SPPL2b-dependent regulated intramembrane proteolysis.</title>
        <authorList>
            <person name="Martin L."/>
            <person name="Fluhrer R."/>
            <person name="Haass C."/>
        </authorList>
    </citation>
    <scope>FUNCTION IN CLEAVAGE OF ITM2B</scope>
</reference>
<reference key="14">
    <citation type="journal article" date="2009" name="J. Proteome Res.">
        <title>Glycoproteomics analysis of human liver tissue by combination of multiple enzyme digestion and hydrazide chemistry.</title>
        <authorList>
            <person name="Chen R."/>
            <person name="Jiang X."/>
            <person name="Sun D."/>
            <person name="Han G."/>
            <person name="Wang F."/>
            <person name="Ye M."/>
            <person name="Wang L."/>
            <person name="Zou H."/>
        </authorList>
    </citation>
    <scope>GLYCOSYLATION [LARGE SCALE ANALYSIS] AT ASN-278</scope>
    <source>
        <tissue>Liver</tissue>
    </source>
</reference>
<reference key="15">
    <citation type="journal article" date="2009" name="Nat. Biotechnol.">
        <title>Mass-spectrometric identification and relative quantification of N-linked cell surface glycoproteins.</title>
        <authorList>
            <person name="Wollscheid B."/>
            <person name="Bausch-Fluck D."/>
            <person name="Henderson C."/>
            <person name="O'Brien R."/>
            <person name="Bibel M."/>
            <person name="Schiess R."/>
            <person name="Aebersold R."/>
            <person name="Watts J.D."/>
        </authorList>
    </citation>
    <scope>GLYCOSYLATION [LARGE SCALE ANALYSIS] AT ASN-278</scope>
    <source>
        <tissue>Leukemic T-cell</tissue>
    </source>
</reference>
<reference key="16">
    <citation type="journal article" date="2010" name="J. Biol. Chem.">
        <title>Nerve growth factor inhibits metalloproteinase-disintegrins and blocks ectodomain shedding of platelet glycoprotein VI.</title>
        <authorList>
            <person name="Wijeyewickrema L.C."/>
            <person name="Gardiner E.E."/>
            <person name="Gladigau E.L."/>
            <person name="Berndt M.C."/>
            <person name="Andrews R.K."/>
        </authorList>
    </citation>
    <scope>INTERACTION WITH NGF</scope>
</reference>
<reference key="17">
    <citation type="journal article" date="2010" name="J. Immunol.">
        <title>Junctional adhesion molecule-C is a soluble mediator of angiogenesis.</title>
        <authorList>
            <person name="Rabquer B.J."/>
            <person name="Amin M.A."/>
            <person name="Teegala N."/>
            <person name="Shaheen M.K."/>
            <person name="Tsou P.S."/>
            <person name="Ruth J.H."/>
            <person name="Lesch C.A."/>
            <person name="Imhof B.A."/>
            <person name="Koch A.E."/>
        </authorList>
    </citation>
    <scope>FUNCTION IN CLEAVAGE OF JAM3</scope>
</reference>
<reference key="18">
    <citation type="journal article" date="2010" name="Proc. Natl. Acad. Sci. U.S.A.">
        <title>Role of a disintegrin and metalloprotease 10 in Staphylococcus aureus alpha-hemolysin-mediated cellular injury.</title>
        <authorList>
            <person name="Wilke G.A."/>
            <person name="Bubeck Wardenburg J."/>
        </authorList>
    </citation>
    <scope>FUNCTION (MICROBIAL INFECTION)</scope>
    <scope>INTERACTION WITH S.AUREUS HLY</scope>
    <scope>SUBCELLULAR LOCATION</scope>
</reference>
<reference key="19">
    <citation type="journal article" date="2011" name="BMC Syst. Biol.">
        <title>Initial characterization of the human central proteome.</title>
        <authorList>
            <person name="Burkard T.R."/>
            <person name="Planyavsky M."/>
            <person name="Kaupe I."/>
            <person name="Breitwieser F.P."/>
            <person name="Buerckstuemmer T."/>
            <person name="Bennett K.L."/>
            <person name="Superti-Furga G."/>
            <person name="Colinge J."/>
        </authorList>
    </citation>
    <scope>IDENTIFICATION BY MASS SPECTROMETRY [LARGE SCALE ANALYSIS]</scope>
</reference>
<reference key="20">
    <citation type="journal article" date="2011" name="J. Biol. Chem.">
        <title>Ectodomain shedding and autocleavage of the cardiac membrane protease corin.</title>
        <authorList>
            <person name="Jiang J."/>
            <person name="Wu S."/>
            <person name="Wang W."/>
            <person name="Chen S."/>
            <person name="Peng J."/>
            <person name="Zhang X."/>
            <person name="Wu Q."/>
        </authorList>
    </citation>
    <scope>FUNCTION IN CLEAVAGE OF CORIN</scope>
</reference>
<reference key="21">
    <citation type="journal article" date="2013" name="J. Clin. Invest.">
        <title>Endocytosis of synaptic ADAM10 in neuronal plasticity and Alzheimer's disease.</title>
        <authorList>
            <person name="Marcello E."/>
            <person name="Saraceno C."/>
            <person name="Musardo S."/>
            <person name="Vara H."/>
            <person name="de la Fuente A.G."/>
            <person name="Pelucchi S."/>
            <person name="Di Marino D."/>
            <person name="Borroni B."/>
            <person name="Tramontano A."/>
            <person name="Perez-Otano I."/>
            <person name="Padovani A."/>
            <person name="Giustetto M."/>
            <person name="Gardoni F."/>
            <person name="Di Luca M."/>
        </authorList>
    </citation>
    <scope>INTERACTION WITH AP2A1; AP2A2; AP2B1; AP2M1 AND DLG1</scope>
    <scope>SUBCELLULAR LOCATION</scope>
    <scope>TISSUE SPECIFICITY</scope>
</reference>
<reference key="22">
    <citation type="journal article" date="2013" name="J. Proteome Res.">
        <title>Toward a comprehensive characterization of a human cancer cell phosphoproteome.</title>
        <authorList>
            <person name="Zhou H."/>
            <person name="Di Palma S."/>
            <person name="Preisinger C."/>
            <person name="Peng M."/>
            <person name="Polat A.N."/>
            <person name="Heck A.J."/>
            <person name="Mohammed S."/>
        </authorList>
    </citation>
    <scope>PHOSPHORYLATION [LARGE SCALE ANALYSIS] AT THR-719</scope>
    <scope>IDENTIFICATION BY MASS SPECTROMETRY [LARGE SCALE ANALYSIS]</scope>
    <source>
        <tissue>Cervix carcinoma</tissue>
    </source>
</reference>
<reference key="23">
    <citation type="journal article" date="2014" name="J. Proteomics">
        <title>An enzyme assisted RP-RPLC approach for in-depth analysis of human liver phosphoproteome.</title>
        <authorList>
            <person name="Bian Y."/>
            <person name="Song C."/>
            <person name="Cheng K."/>
            <person name="Dong M."/>
            <person name="Wang F."/>
            <person name="Huang J."/>
            <person name="Sun D."/>
            <person name="Wang L."/>
            <person name="Ye M."/>
            <person name="Zou H."/>
        </authorList>
    </citation>
    <scope>PHOSPHORYLATION [LARGE SCALE ANALYSIS] AT THR-719</scope>
    <scope>IDENTIFICATION BY MASS SPECTROMETRY [LARGE SCALE ANALYSIS]</scope>
    <source>
        <tissue>Liver</tissue>
    </source>
</reference>
<reference key="24">
    <citation type="journal article" date="2014" name="Sci. Transl. Med.">
        <title>TREM2 mutations implicated in neurodegeneration impair cell surface transport and phagocytosis.</title>
        <authorList>
            <person name="Kleinberger G."/>
            <person name="Yamanishi Y."/>
            <person name="Suarez-Calvet M."/>
            <person name="Czirr E."/>
            <person name="Lohmann E."/>
            <person name="Cuyvers E."/>
            <person name="Struyfs H."/>
            <person name="Pettkus N."/>
            <person name="Wenninger-Weinzierl A."/>
            <person name="Mazaheri F."/>
            <person name="Tahirovic S."/>
            <person name="Lleo A."/>
            <person name="Alcolea D."/>
            <person name="Fortea J."/>
            <person name="Willem M."/>
            <person name="Lammich S."/>
            <person name="Molinuevo J.L."/>
            <person name="Sanchez-Valle R."/>
            <person name="Antonell A."/>
            <person name="Ramirez A."/>
            <person name="Heneka M.T."/>
            <person name="Sleegers K."/>
            <person name="van der Zee J."/>
            <person name="Martin J.J."/>
            <person name="Engelborghs S."/>
            <person name="Demirtas-Tatlidede A."/>
            <person name="Zetterberg H."/>
            <person name="Van Broeckhoven C."/>
            <person name="Gurvit H."/>
            <person name="Wyss-Coray T."/>
            <person name="Hardy J."/>
            <person name="Colonna M."/>
            <person name="Haass C."/>
        </authorList>
    </citation>
    <scope>FUNCTION</scope>
    <scope>SUBCELLULAR LOCATION</scope>
</reference>
<reference key="25">
    <citation type="journal article" date="2015" name="Cell">
        <title>A single kinase generates the majority of the secreted phosphoproteome.</title>
        <authorList>
            <person name="Tagliabracci V.S."/>
            <person name="Wiley S.E."/>
            <person name="Guo X."/>
            <person name="Kinch L.N."/>
            <person name="Durrant E."/>
            <person name="Wen J."/>
            <person name="Xiao J."/>
            <person name="Cui J."/>
            <person name="Nguyen K.B."/>
            <person name="Engel J.L."/>
            <person name="Coon J.J."/>
            <person name="Grishin N."/>
            <person name="Pinna L.A."/>
            <person name="Pagliarini D.J."/>
            <person name="Dixon J.E."/>
        </authorList>
    </citation>
    <scope>PHOSPHORYLATION AT THR-719</scope>
</reference>
<reference key="26">
    <citation type="journal article" date="2015" name="Proteomics">
        <title>N-terminome analysis of the human mitochondrial proteome.</title>
        <authorList>
            <person name="Vaca Jacome A.S."/>
            <person name="Rabilloud T."/>
            <person name="Schaeffer-Reiss C."/>
            <person name="Rompais M."/>
            <person name="Ayoub D."/>
            <person name="Lane L."/>
            <person name="Bairoch A."/>
            <person name="Van Dorsselaer A."/>
            <person name="Carapito C."/>
        </authorList>
    </citation>
    <scope>IDENTIFICATION BY MASS SPECTROMETRY [LARGE SCALE ANALYSIS]</scope>
</reference>
<reference key="27">
    <citation type="journal article" date="2016" name="Cell. Mol. Life Sci.">
        <title>TspanC8 tetraspanins differentially regulate the cleavage of ADAM10 substrates, Notch activation and ADAM10 membrane compartmentalization.</title>
        <authorList>
            <person name="Jouannet S."/>
            <person name="Saint-Pol J."/>
            <person name="Fernandez L."/>
            <person name="Nguyen V."/>
            <person name="Charrin S."/>
            <person name="Boucheix C."/>
            <person name="Brou C."/>
            <person name="Milhiet P.E."/>
            <person name="Rubinstein E."/>
        </authorList>
    </citation>
    <scope>FUNCTION</scope>
    <scope>CATALYTIC ACTIVITY</scope>
    <scope>SUBCELLULAR LOCATION</scope>
    <scope>INTERACTION WITH TSPAN5; TSPAN14; TSPAN15 AND TSPAN33</scope>
</reference>
<reference key="28">
    <citation type="journal article" date="2016" name="Cell Rep.">
        <title>Proteolytic Cleavage Governs Interleukin-11 Trans-signaling.</title>
        <authorList>
            <person name="Lokau J."/>
            <person name="Nitz R."/>
            <person name="Agthe M."/>
            <person name="Monhasery N."/>
            <person name="Aparicio-Siegmund S."/>
            <person name="Schumacher N."/>
            <person name="Wolf J."/>
            <person name="Moeller-Hackbarth K."/>
            <person name="Waetzig G.H."/>
            <person name="Groetzinger J."/>
            <person name="Mueller-Newen G."/>
            <person name="Rose-John S."/>
            <person name="Scheller J."/>
            <person name="Garbers C."/>
        </authorList>
    </citation>
    <scope>FUNCTION</scope>
</reference>
<reference key="29">
    <citation type="journal article" date="2016" name="J. Biol. Chem.">
        <title>TspanC8 tetraspanins and A disintegrin and metalloprotease 10 (ADAM10) interact via their extracellular regions: evidence for distinct binding mechanisms for different TspanC8 proteins.</title>
        <authorList>
            <person name="Noy P.J."/>
            <person name="Yang J."/>
            <person name="Reyat J.S."/>
            <person name="Matthews A.L."/>
            <person name="Charlton A.E."/>
            <person name="Furmston J."/>
            <person name="Rogers D.A."/>
            <person name="Rainger G.E."/>
            <person name="Tomlinson M.G."/>
        </authorList>
    </citation>
    <scope>INTERACTION WITH TSPAN14</scope>
    <scope>DOMAIN</scope>
</reference>
<reference key="30">
    <citation type="journal article" date="2018" name="Cell Rep.">
        <title>A Dock-and-Lock Mechanism Clusters ADAM10 at Cell-Cell Junctions to Promote alpha-Toxin Cytotoxicity.</title>
        <authorList>
            <person name="Shah J."/>
            <person name="Rouaud F."/>
            <person name="Guerrera D."/>
            <person name="Vasileva E."/>
            <person name="Popov L.M."/>
            <person name="Kelley W.L."/>
            <person name="Rubinstein E."/>
            <person name="Carette J.E."/>
            <person name="Amieva M.R."/>
            <person name="Citi S."/>
        </authorList>
    </citation>
    <scope>FUNCTION (MICROBIAL INFECTION)</scope>
    <scope>INTERACTION WITH TSPAN33 AND AFDN</scope>
    <scope>SUBCELLULAR LOCATION</scope>
</reference>
<reference key="31">
    <citation type="journal article" date="2018" name="FASEB J.">
        <title>The metalloprotease ADAM10 (a disintegrin and metalloprotease 10) undergoes rapid, postlysis autocatalytic degradation.</title>
        <authorList>
            <person name="Brummer T."/>
            <person name="Pigoni M."/>
            <person name="Rossello A."/>
            <person name="Wang H."/>
            <person name="Noy P.J."/>
            <person name="Tomlinson M.G."/>
            <person name="Blobel C.P."/>
            <person name="Lichtenthaler S.F."/>
        </authorList>
    </citation>
    <scope>CATALYTIC ACTIVITY</scope>
    <scope>SUBCELLULAR LOCATION</scope>
    <scope>ACTIVE SITE</scope>
    <scope>MUTAGENESIS OF GLU-384</scope>
</reference>
<reference key="32">
    <citation type="journal article" date="2019" name="Am. J. Pathol.">
        <title>Astroprincin (FAM171A1, C10orf38): A Regulator of Human Cell Shape and Invasive Growth.</title>
        <authorList>
            <person name="Rasila T."/>
            <person name="Saavalainen O."/>
            <person name="Attalla H."/>
            <person name="Lankila P."/>
            <person name="Haglund C."/>
            <person name="Hoelttae E."/>
            <person name="Andersson L.C."/>
        </authorList>
    </citation>
    <scope>INTERACTION WITH FAM171A1</scope>
</reference>
<reference key="33">
    <citation type="journal article" date="2017" name="J. Immunol.">
        <title>ADAM10-Interacting Tetraspanins Tspan5 and Tspan17 Regulate VE-Cadherin Expression and Promote T Lymphocyte Transmigration.</title>
        <authorList>
            <person name="Reyat J.S."/>
            <person name="Chimen M."/>
            <person name="Noy P.J."/>
            <person name="Szyroka J."/>
            <person name="Rainger G.E."/>
            <person name="Tomlinson M.G."/>
        </authorList>
    </citation>
    <scope>FUNCTION</scope>
    <scope>INTERACTION WITH TSPAN5 AND TSPAN17</scope>
</reference>
<reference key="34">
    <citation type="journal article" date="2020" name="Life. Sci Alliance">
        <title>TspanC8 tetraspanins differentially regulate ADAM10 endocytosis and half-life.</title>
        <authorList>
            <person name="Eschenbrenner E."/>
            <person name="Jouannet S."/>
            <person name="Clay D."/>
            <person name="Chaker J."/>
            <person name="Boucheix C."/>
            <person name="Brou C."/>
            <person name="Tomlinson M.G."/>
            <person name="Charrin S."/>
            <person name="Rubinstein E."/>
        </authorList>
    </citation>
    <scope>FUNCTION</scope>
    <scope>INTERACTION WITH TSPAN5 AND TSPAN15</scope>
</reference>
<reference key="35">
    <citation type="journal article" date="2022" name="Structure">
        <title>Crystal structure of the Tspan15 LEL domain reveals a conserved ADAM10 binding site.</title>
        <authorList>
            <person name="Lipper C.H."/>
            <person name="Gabriel K.H."/>
            <person name="Seegar T.C.M."/>
            <person name="Duerr K.L."/>
            <person name="Tomlinson M.G."/>
            <person name="Blacklow S.C."/>
        </authorList>
    </citation>
    <scope>FUNCTION</scope>
    <scope>INTERACTION WITH TSPAN15</scope>
</reference>
<reference evidence="46 47" key="36">
    <citation type="journal article" date="2017" name="Cell">
        <title>Structural basis for regulated proteolysis by the alpha-secretase ADAM10.</title>
        <authorList>
            <person name="Seegar T.C.M."/>
            <person name="Killingsworth L.B."/>
            <person name="Saha N."/>
            <person name="Meyer P.A."/>
            <person name="Patra D."/>
            <person name="Zimmerman B."/>
            <person name="Janes P.W."/>
            <person name="Rubinstein E."/>
            <person name="Nikolov D.B."/>
            <person name="Skiniotis G."/>
            <person name="Kruse A.C."/>
            <person name="Blacklow S.C."/>
        </authorList>
    </citation>
    <scope>X-RAY CRYSTALLOGRAPHY (2.80 ANGSTROMS) OF 214-654 IN COMPLEX WITH ZINC</scope>
    <scope>CATALYTIC ACTIVITY</scope>
    <scope>FUNCTION</scope>
    <scope>MUTAGENESIS OF GLU-384</scope>
    <scope>GLYCOSYLATION AT ASN-278</scope>
    <scope>DISULFIDE BOND</scope>
    <scope>ACTIVE SITE</scope>
</reference>
<reference evidence="48" key="37">
    <citation type="journal article" date="2023" name="Cell">
        <title>Structural basis for membrane-proximal proteolysis of substrates by ADAM10.</title>
        <authorList>
            <person name="Lipper C.H."/>
            <person name="Egan E.D."/>
            <person name="Gabriel K.H."/>
            <person name="Blacklow S.C."/>
        </authorList>
    </citation>
    <scope>STRUCTURE BY ELECTRON MICROSCOPY (3.3 ANGSTROMS) OF 214-748 IN COMPLEX WITH TSPAN15 AND ZINC</scope>
    <scope>INTERACTION WITH TSPAN15</scope>
    <scope>FUNCTION</scope>
    <scope>BIOPHYSICOCHEMICAL PROPERTIES</scope>
    <scope>CATALYTIC ACTIVITY</scope>
    <scope>DISULFIDE BOND</scope>
    <scope>MUTAGENESIS OF 638-TYR--ARG-646 AND 653-PRO--ARG-656</scope>
</reference>
<reference key="38">
    <citation type="journal article" date="2009" name="Hum. Mol. Genet.">
        <title>Potential late-onset Alzheimer's disease-associated mutations in the ADAM10 gene attenuate {alpha}-secretase activity.</title>
        <authorList>
            <person name="Kim M."/>
            <person name="Suh J."/>
            <person name="Romano D."/>
            <person name="Truong M.H."/>
            <person name="Mullin K."/>
            <person name="Hooli B."/>
            <person name="Norton D."/>
            <person name="Tesco G."/>
            <person name="Elliott K."/>
            <person name="Wagner S.L."/>
            <person name="Moir R.D."/>
            <person name="Becker K.D."/>
            <person name="Tanzi R.E."/>
        </authorList>
    </citation>
    <scope>VARIANTS AD18 HIS-170 AND GLY-181</scope>
    <scope>CHARACTERIZATION OF VARIANTS AD18 HIS-170 AND GLY-181</scope>
</reference>
<reference key="39">
    <citation type="journal article" date="2011" name="Hum. Mutat.">
        <title>Analysis of the disintegrin-metalloproteinases family reveals ADAM29 and ADAM7 are often mutated in melanoma.</title>
        <authorList>
            <person name="Wei X."/>
            <person name="Moncada-Pazos A."/>
            <person name="Cal S."/>
            <person name="Soria-Valles C."/>
            <person name="Gartner J."/>
            <person name="Rudloff U."/>
            <person name="Lin J.C."/>
            <person name="Rosenberg S.A."/>
            <person name="Lopez-Otin C."/>
            <person name="Samuels Y."/>
        </authorList>
    </citation>
    <scope>VARIANT TYR-176</scope>
</reference>
<reference key="40">
    <citation type="journal article" date="2013" name="Hum. Mol. Genet.">
        <title>Whole-exome sequencing identifies ADAM10 mutations as a cause of reticulate acropigmentation of Kitamura, a clinical entity distinct from Dowling-Degos disease.</title>
        <authorList>
            <person name="Kono M."/>
            <person name="Sugiura K."/>
            <person name="Suganuma M."/>
            <person name="Hayashi M."/>
            <person name="Takama H."/>
            <person name="Suzuki T."/>
            <person name="Matsunaga K."/>
            <person name="Tomita Y."/>
            <person name="Akiyama M."/>
        </authorList>
    </citation>
    <scope>VARIANTS RAK SER-139 AND TYR-524</scope>
</reference>
<reference key="41">
    <citation type="journal article" date="2013" name="Neuron">
        <title>ADAM10 missense mutations potentiate beta-amyloid accumulation by impairing prodomain chaperone function.</title>
        <authorList>
            <person name="Suh J."/>
            <person name="Choi S.H."/>
            <person name="Romano D.M."/>
            <person name="Gannon M.A."/>
            <person name="Lesinski A.N."/>
            <person name="Kim D.Y."/>
            <person name="Tanzi R.E."/>
        </authorList>
    </citation>
    <scope>CHARACTERIZATION OF VARIANTS AD18 HIS-170 AND GLY-181</scope>
</reference>
<protein>
    <recommendedName>
        <fullName evidence="43">Disintegrin and metalloproteinase domain-containing protein 10</fullName>
        <shortName>ADAM 10</shortName>
        <ecNumber evidence="9 12 13 15 16 21 34">3.4.24.81</ecNumber>
    </recommendedName>
    <alternativeName>
        <fullName>CDw156</fullName>
    </alternativeName>
    <alternativeName>
        <fullName>Kuzbanian protein homolog</fullName>
    </alternativeName>
    <alternativeName>
        <fullName>Mammalian disintegrin-metalloprotease</fullName>
    </alternativeName>
    <cdAntigenName>CD156c</cdAntigenName>
</protein>
<accession>O14672</accession>
<accession>B4DU28</accession>
<accession>Q10742</accession>
<accession>Q92650</accession>
<dbReference type="EC" id="3.4.24.81" evidence="9 12 13 15 16 21 34"/>
<dbReference type="EMBL" id="AF009615">
    <property type="protein sequence ID" value="AAC51766.1"/>
    <property type="molecule type" value="mRNA"/>
</dbReference>
<dbReference type="EMBL" id="AK300472">
    <property type="protein sequence ID" value="BAG62190.1"/>
    <property type="molecule type" value="mRNA"/>
</dbReference>
<dbReference type="EMBL" id="AC018904">
    <property type="status" value="NOT_ANNOTATED_CDS"/>
    <property type="molecule type" value="Genomic_DNA"/>
</dbReference>
<dbReference type="EMBL" id="AC091046">
    <property type="status" value="NOT_ANNOTATED_CDS"/>
    <property type="molecule type" value="Genomic_DNA"/>
</dbReference>
<dbReference type="EMBL" id="Z48579">
    <property type="protein sequence ID" value="CAA88463.1"/>
    <property type="molecule type" value="mRNA"/>
</dbReference>
<dbReference type="CCDS" id="CCDS10167.1">
    <molecule id="O14672-1"/>
</dbReference>
<dbReference type="RefSeq" id="NP_001101.1">
    <molecule id="O14672-1"/>
    <property type="nucleotide sequence ID" value="NM_001110.4"/>
</dbReference>
<dbReference type="PDB" id="6BDZ">
    <property type="method" value="X-ray"/>
    <property type="resolution" value="3.10 A"/>
    <property type="chains" value="A=220-654"/>
</dbReference>
<dbReference type="PDB" id="6BE6">
    <property type="method" value="X-ray"/>
    <property type="resolution" value="2.80 A"/>
    <property type="chains" value="A/B/C/D=214-654"/>
</dbReference>
<dbReference type="PDB" id="8ESV">
    <property type="method" value="EM"/>
    <property type="resolution" value="3.30 A"/>
    <property type="chains" value="A=214-748"/>
</dbReference>
<dbReference type="PDBsum" id="6BDZ"/>
<dbReference type="PDBsum" id="6BE6"/>
<dbReference type="PDBsum" id="8ESV"/>
<dbReference type="EMDB" id="EMD-28580"/>
<dbReference type="SMR" id="O14672"/>
<dbReference type="BioGRID" id="106616">
    <property type="interactions" value="123"/>
</dbReference>
<dbReference type="DIP" id="DIP-39889N"/>
<dbReference type="FunCoup" id="O14672">
    <property type="interactions" value="3380"/>
</dbReference>
<dbReference type="IntAct" id="O14672">
    <property type="interactions" value="148"/>
</dbReference>
<dbReference type="MINT" id="O14672"/>
<dbReference type="STRING" id="9606.ENSP00000260408"/>
<dbReference type="BindingDB" id="O14672"/>
<dbReference type="ChEMBL" id="CHEMBL5028"/>
<dbReference type="DrugBank" id="DB04991">
    <property type="generic name" value="XL784"/>
</dbReference>
<dbReference type="GuidetoPHARMACOLOGY" id="1658"/>
<dbReference type="MEROPS" id="M12.210"/>
<dbReference type="TCDB" id="8.A.77.1.4">
    <property type="family name" value="the sheddase (sheddase) family"/>
</dbReference>
<dbReference type="GlyConnect" id="1178">
    <property type="glycosylation" value="5 N-Linked glycans (2 sites)"/>
</dbReference>
<dbReference type="GlyCosmos" id="O14672">
    <property type="glycosylation" value="5 sites, 6 glycans"/>
</dbReference>
<dbReference type="GlyGen" id="O14672">
    <property type="glycosylation" value="14 sites, 55 N-linked glycans (4 sites), 3 O-linked glycans (8 sites)"/>
</dbReference>
<dbReference type="iPTMnet" id="O14672"/>
<dbReference type="PhosphoSitePlus" id="O14672"/>
<dbReference type="SwissPalm" id="O14672"/>
<dbReference type="BioMuta" id="ADAM10"/>
<dbReference type="jPOST" id="O14672"/>
<dbReference type="MassIVE" id="O14672"/>
<dbReference type="PaxDb" id="9606-ENSP00000260408"/>
<dbReference type="PeptideAtlas" id="O14672"/>
<dbReference type="ProteomicsDB" id="48162">
    <molecule id="O14672-1"/>
</dbReference>
<dbReference type="ProteomicsDB" id="5144"/>
<dbReference type="Pumba" id="O14672"/>
<dbReference type="ABCD" id="O14672">
    <property type="antibodies" value="29 sequenced antibodies"/>
</dbReference>
<dbReference type="Antibodypedia" id="3441">
    <property type="antibodies" value="590 antibodies from 43 providers"/>
</dbReference>
<dbReference type="DNASU" id="102"/>
<dbReference type="Ensembl" id="ENST00000260408.8">
    <molecule id="O14672-1"/>
    <property type="protein sequence ID" value="ENSP00000260408.3"/>
    <property type="gene ID" value="ENSG00000137845.15"/>
</dbReference>
<dbReference type="GeneID" id="102"/>
<dbReference type="KEGG" id="hsa:102"/>
<dbReference type="MANE-Select" id="ENST00000260408.8">
    <property type="protein sequence ID" value="ENSP00000260408.3"/>
    <property type="RefSeq nucleotide sequence ID" value="NM_001110.4"/>
    <property type="RefSeq protein sequence ID" value="NP_001101.1"/>
</dbReference>
<dbReference type="UCSC" id="uc002afd.3">
    <molecule id="O14672-1"/>
    <property type="organism name" value="human"/>
</dbReference>
<dbReference type="AGR" id="HGNC:188"/>
<dbReference type="CTD" id="102"/>
<dbReference type="DisGeNET" id="102"/>
<dbReference type="GeneCards" id="ADAM10"/>
<dbReference type="HGNC" id="HGNC:188">
    <property type="gene designation" value="ADAM10"/>
</dbReference>
<dbReference type="HPA" id="ENSG00000137845">
    <property type="expression patterns" value="Low tissue specificity"/>
</dbReference>
<dbReference type="MalaCards" id="ADAM10"/>
<dbReference type="MIM" id="602192">
    <property type="type" value="gene"/>
</dbReference>
<dbReference type="MIM" id="615537">
    <property type="type" value="phenotype"/>
</dbReference>
<dbReference type="MIM" id="615590">
    <property type="type" value="phenotype"/>
</dbReference>
<dbReference type="neXtProt" id="NX_O14672"/>
<dbReference type="OpenTargets" id="ENSG00000137845"/>
<dbReference type="Orphanet" id="178307">
    <property type="disease" value="Reticulate acropigmentation of Kitamura"/>
</dbReference>
<dbReference type="PharmGKB" id="PA24505"/>
<dbReference type="VEuPathDB" id="HostDB:ENSG00000137845"/>
<dbReference type="eggNOG" id="KOG3658">
    <property type="taxonomic scope" value="Eukaryota"/>
</dbReference>
<dbReference type="GeneTree" id="ENSGT00940000160579"/>
<dbReference type="HOGENOM" id="CLU_004602_0_0_1"/>
<dbReference type="InParanoid" id="O14672"/>
<dbReference type="OMA" id="MAVFIRC"/>
<dbReference type="OrthoDB" id="2149267at2759"/>
<dbReference type="PAN-GO" id="O14672">
    <property type="GO annotations" value="5 GO annotations based on evolutionary models"/>
</dbReference>
<dbReference type="PhylomeDB" id="O14672"/>
<dbReference type="TreeFam" id="TF352021"/>
<dbReference type="BioCyc" id="MetaCyc:ENSG00000137845-MONOMER"/>
<dbReference type="BRENDA" id="3.4.24.81">
    <property type="organism ID" value="2681"/>
</dbReference>
<dbReference type="PathwayCommons" id="O14672"/>
<dbReference type="Reactome" id="R-HSA-1442490">
    <property type="pathway name" value="Collagen degradation"/>
</dbReference>
<dbReference type="Reactome" id="R-HSA-1474228">
    <property type="pathway name" value="Degradation of the extracellular matrix"/>
</dbReference>
<dbReference type="Reactome" id="R-HSA-177929">
    <property type="pathway name" value="Signaling by EGFR"/>
</dbReference>
<dbReference type="Reactome" id="R-HSA-2122948">
    <property type="pathway name" value="Activated NOTCH1 Transmits Signal to the Nucleus"/>
</dbReference>
<dbReference type="Reactome" id="R-HSA-2644606">
    <property type="pathway name" value="Constitutive Signaling by NOTCH1 PEST Domain Mutants"/>
</dbReference>
<dbReference type="Reactome" id="R-HSA-2660826">
    <property type="pathway name" value="Constitutive Signaling by NOTCH1 t(7;9)(NOTCH1:M1580_K2555) Translocation Mutant"/>
</dbReference>
<dbReference type="Reactome" id="R-HSA-2691232">
    <property type="pathway name" value="Constitutive Signaling by NOTCH1 HD Domain Mutants"/>
</dbReference>
<dbReference type="Reactome" id="R-HSA-2894862">
    <property type="pathway name" value="Constitutive Signaling by NOTCH1 HD+PEST Domain Mutants"/>
</dbReference>
<dbReference type="Reactome" id="R-HSA-2979096">
    <property type="pathway name" value="NOTCH2 Activation and Transmission of Signal to the Nucleus"/>
</dbReference>
<dbReference type="Reactome" id="R-HSA-381426">
    <property type="pathway name" value="Regulation of Insulin-like Growth Factor (IGF) transport and uptake by Insulin-like Growth Factor Binding Proteins (IGFBPs)"/>
</dbReference>
<dbReference type="Reactome" id="R-HSA-3928665">
    <property type="pathway name" value="EPH-ephrin mediated repulsion of cells"/>
</dbReference>
<dbReference type="Reactome" id="R-HSA-6798695">
    <property type="pathway name" value="Neutrophil degranulation"/>
</dbReference>
<dbReference type="Reactome" id="R-HSA-8957275">
    <property type="pathway name" value="Post-translational protein phosphorylation"/>
</dbReference>
<dbReference type="Reactome" id="R-HSA-9013507">
    <property type="pathway name" value="NOTCH3 Activation and Transmission of Signal to the Nucleus"/>
</dbReference>
<dbReference type="Reactome" id="R-HSA-9013700">
    <property type="pathway name" value="NOTCH4 Activation and Transmission of Signal to the Nucleus"/>
</dbReference>
<dbReference type="Reactome" id="R-HSA-977225">
    <property type="pathway name" value="Amyloid fiber formation"/>
</dbReference>
<dbReference type="SignaLink" id="O14672"/>
<dbReference type="SIGNOR" id="O14672"/>
<dbReference type="BioGRID-ORCS" id="102">
    <property type="hits" value="28 hits in 1161 CRISPR screens"/>
</dbReference>
<dbReference type="ChiTaRS" id="ADAM10">
    <property type="organism name" value="human"/>
</dbReference>
<dbReference type="GeneWiki" id="ADAM10"/>
<dbReference type="GenomeRNAi" id="102"/>
<dbReference type="Pharos" id="O14672">
    <property type="development level" value="Tchem"/>
</dbReference>
<dbReference type="PRO" id="PR:O14672"/>
<dbReference type="Proteomes" id="UP000005640">
    <property type="component" value="Chromosome 15"/>
</dbReference>
<dbReference type="RNAct" id="O14672">
    <property type="molecule type" value="protein"/>
</dbReference>
<dbReference type="Bgee" id="ENSG00000137845">
    <property type="expression patterns" value="Expressed in stromal cell of endometrium and 220 other cell types or tissues"/>
</dbReference>
<dbReference type="ExpressionAtlas" id="O14672">
    <property type="expression patterns" value="baseline and differential"/>
</dbReference>
<dbReference type="GO" id="GO:0005912">
    <property type="term" value="C:adherens junction"/>
    <property type="evidence" value="ECO:0007669"/>
    <property type="project" value="UniProtKB-SubCell"/>
</dbReference>
<dbReference type="GO" id="GO:0030424">
    <property type="term" value="C:axon"/>
    <property type="evidence" value="ECO:0007669"/>
    <property type="project" value="UniProtKB-SubCell"/>
</dbReference>
<dbReference type="GO" id="GO:0009986">
    <property type="term" value="C:cell surface"/>
    <property type="evidence" value="ECO:0000314"/>
    <property type="project" value="UniProtKB"/>
</dbReference>
<dbReference type="GO" id="GO:0030136">
    <property type="term" value="C:clathrin-coated vesicle"/>
    <property type="evidence" value="ECO:0007669"/>
    <property type="project" value="UniProtKB-SubCell"/>
</dbReference>
<dbReference type="GO" id="GO:0005737">
    <property type="term" value="C:cytoplasm"/>
    <property type="evidence" value="ECO:0000250"/>
    <property type="project" value="UniProtKB"/>
</dbReference>
<dbReference type="GO" id="GO:0030425">
    <property type="term" value="C:dendrite"/>
    <property type="evidence" value="ECO:0007669"/>
    <property type="project" value="UniProtKB-SubCell"/>
</dbReference>
<dbReference type="GO" id="GO:0005788">
    <property type="term" value="C:endoplasmic reticulum lumen"/>
    <property type="evidence" value="ECO:0000304"/>
    <property type="project" value="Reactome"/>
</dbReference>
<dbReference type="GO" id="GO:0070062">
    <property type="term" value="C:extracellular exosome"/>
    <property type="evidence" value="ECO:0007005"/>
    <property type="project" value="UniProtKB"/>
</dbReference>
<dbReference type="GO" id="GO:0005925">
    <property type="term" value="C:focal adhesion"/>
    <property type="evidence" value="ECO:0007005"/>
    <property type="project" value="UniProtKB"/>
</dbReference>
<dbReference type="GO" id="GO:0098978">
    <property type="term" value="C:glutamatergic synapse"/>
    <property type="evidence" value="ECO:0007669"/>
    <property type="project" value="Ensembl"/>
</dbReference>
<dbReference type="GO" id="GO:0005794">
    <property type="term" value="C:Golgi apparatus"/>
    <property type="evidence" value="ECO:0000314"/>
    <property type="project" value="UniProtKB"/>
</dbReference>
<dbReference type="GO" id="GO:0000139">
    <property type="term" value="C:Golgi membrane"/>
    <property type="evidence" value="ECO:0007669"/>
    <property type="project" value="UniProtKB-SubCell"/>
</dbReference>
<dbReference type="GO" id="GO:0005798">
    <property type="term" value="C:Golgi-associated vesicle"/>
    <property type="evidence" value="ECO:0000314"/>
    <property type="project" value="UniProtKB"/>
</dbReference>
<dbReference type="GO" id="GO:0043231">
    <property type="term" value="C:intracellular membrane-bounded organelle"/>
    <property type="evidence" value="ECO:0000314"/>
    <property type="project" value="HPA"/>
</dbReference>
<dbReference type="GO" id="GO:0016020">
    <property type="term" value="C:membrane"/>
    <property type="evidence" value="ECO:0007005"/>
    <property type="project" value="UniProtKB"/>
</dbReference>
<dbReference type="GO" id="GO:0005634">
    <property type="term" value="C:nucleus"/>
    <property type="evidence" value="ECO:0000250"/>
    <property type="project" value="UniProtKB"/>
</dbReference>
<dbReference type="GO" id="GO:0097038">
    <property type="term" value="C:perinuclear endoplasmic reticulum"/>
    <property type="evidence" value="ECO:0000314"/>
    <property type="project" value="UniProtKB"/>
</dbReference>
<dbReference type="GO" id="GO:0005886">
    <property type="term" value="C:plasma membrane"/>
    <property type="evidence" value="ECO:0000314"/>
    <property type="project" value="HPA"/>
</dbReference>
<dbReference type="GO" id="GO:0046930">
    <property type="term" value="C:pore complex"/>
    <property type="evidence" value="ECO:0000315"/>
    <property type="project" value="UniProtKB"/>
</dbReference>
<dbReference type="GO" id="GO:0014069">
    <property type="term" value="C:postsynaptic density"/>
    <property type="evidence" value="ECO:0007669"/>
    <property type="project" value="Ensembl"/>
</dbReference>
<dbReference type="GO" id="GO:0035579">
    <property type="term" value="C:specific granule membrane"/>
    <property type="evidence" value="ECO:0000304"/>
    <property type="project" value="Reactome"/>
</dbReference>
<dbReference type="GO" id="GO:0097060">
    <property type="term" value="C:synaptic membrane"/>
    <property type="evidence" value="ECO:0000314"/>
    <property type="project" value="UniProtKB"/>
</dbReference>
<dbReference type="GO" id="GO:0070821">
    <property type="term" value="C:tertiary granule membrane"/>
    <property type="evidence" value="ECO:0000304"/>
    <property type="project" value="Reactome"/>
</dbReference>
<dbReference type="GO" id="GO:0097197">
    <property type="term" value="C:tetraspanin-enriched microdomain"/>
    <property type="evidence" value="ECO:0000314"/>
    <property type="project" value="UniProtKB"/>
</dbReference>
<dbReference type="GO" id="GO:0004175">
    <property type="term" value="F:endopeptidase activity"/>
    <property type="evidence" value="ECO:0000315"/>
    <property type="project" value="UniProtKB"/>
</dbReference>
<dbReference type="GO" id="GO:0005178">
    <property type="term" value="F:integrin binding"/>
    <property type="evidence" value="ECO:0000303"/>
    <property type="project" value="UniProtKB"/>
</dbReference>
<dbReference type="GO" id="GO:0046872">
    <property type="term" value="F:metal ion binding"/>
    <property type="evidence" value="ECO:0007669"/>
    <property type="project" value="UniProtKB-KW"/>
</dbReference>
<dbReference type="GO" id="GO:0070573">
    <property type="term" value="F:metallodipeptidase activity"/>
    <property type="evidence" value="ECO:0007669"/>
    <property type="project" value="Ensembl"/>
</dbReference>
<dbReference type="GO" id="GO:0004222">
    <property type="term" value="F:metalloendopeptidase activity"/>
    <property type="evidence" value="ECO:0000314"/>
    <property type="project" value="ARUK-UCL"/>
</dbReference>
<dbReference type="GO" id="GO:1902945">
    <property type="term" value="F:metalloendopeptidase activity involved in amyloid precursor protein catabolic process"/>
    <property type="evidence" value="ECO:0000315"/>
    <property type="project" value="UniProtKB"/>
</dbReference>
<dbReference type="GO" id="GO:0008237">
    <property type="term" value="F:metallopeptidase activity"/>
    <property type="evidence" value="ECO:0000314"/>
    <property type="project" value="UniProtKB"/>
</dbReference>
<dbReference type="GO" id="GO:0042803">
    <property type="term" value="F:protein homodimerization activity"/>
    <property type="evidence" value="ECO:0000353"/>
    <property type="project" value="DisProt"/>
</dbReference>
<dbReference type="GO" id="GO:0019901">
    <property type="term" value="F:protein kinase binding"/>
    <property type="evidence" value="ECO:0000250"/>
    <property type="project" value="UniProtKB"/>
</dbReference>
<dbReference type="GO" id="GO:0017124">
    <property type="term" value="F:SH3 domain binding"/>
    <property type="evidence" value="ECO:0007669"/>
    <property type="project" value="UniProtKB-KW"/>
</dbReference>
<dbReference type="GO" id="GO:0005102">
    <property type="term" value="F:signaling receptor binding"/>
    <property type="evidence" value="ECO:0000303"/>
    <property type="project" value="UniProtKB"/>
</dbReference>
<dbReference type="GO" id="GO:0034332">
    <property type="term" value="P:adherens junction organization"/>
    <property type="evidence" value="ECO:0007669"/>
    <property type="project" value="Ensembl"/>
</dbReference>
<dbReference type="GO" id="GO:0042987">
    <property type="term" value="P:amyloid precursor protein catabolic process"/>
    <property type="evidence" value="ECO:0000315"/>
    <property type="project" value="UniProtKB"/>
</dbReference>
<dbReference type="GO" id="GO:0007267">
    <property type="term" value="P:cell-cell signaling"/>
    <property type="evidence" value="ECO:0000303"/>
    <property type="project" value="UniProtKB"/>
</dbReference>
<dbReference type="GO" id="GO:0090102">
    <property type="term" value="P:cochlea development"/>
    <property type="evidence" value="ECO:0007669"/>
    <property type="project" value="Ensembl"/>
</dbReference>
<dbReference type="GO" id="GO:0051089">
    <property type="term" value="P:constitutive protein ectodomain proteolysis"/>
    <property type="evidence" value="ECO:0000314"/>
    <property type="project" value="UniProtKB"/>
</dbReference>
<dbReference type="GO" id="GO:0038004">
    <property type="term" value="P:epidermal growth factor receptor ligand maturation"/>
    <property type="evidence" value="ECO:0007669"/>
    <property type="project" value="Ensembl"/>
</dbReference>
<dbReference type="GO" id="GO:0022617">
    <property type="term" value="P:extracellular matrix disassembly"/>
    <property type="evidence" value="ECO:0000304"/>
    <property type="project" value="Reactome"/>
</dbReference>
<dbReference type="GO" id="GO:0001701">
    <property type="term" value="P:in utero embryonic development"/>
    <property type="evidence" value="ECO:0000250"/>
    <property type="project" value="UniProtKB"/>
</dbReference>
<dbReference type="GO" id="GO:0007229">
    <property type="term" value="P:integrin-mediated signaling pathway"/>
    <property type="evidence" value="ECO:0000303"/>
    <property type="project" value="UniProtKB"/>
</dbReference>
<dbReference type="GO" id="GO:0002315">
    <property type="term" value="P:marginal zone B cell differentiation"/>
    <property type="evidence" value="ECO:0007669"/>
    <property type="project" value="Ensembl"/>
</dbReference>
<dbReference type="GO" id="GO:0006509">
    <property type="term" value="P:membrane protein ectodomain proteolysis"/>
    <property type="evidence" value="ECO:0000314"/>
    <property type="project" value="UniProtKB"/>
</dbReference>
<dbReference type="GO" id="GO:0042117">
    <property type="term" value="P:monocyte activation"/>
    <property type="evidence" value="ECO:0000315"/>
    <property type="project" value="BHF-UCL"/>
</dbReference>
<dbReference type="GO" id="GO:0007162">
    <property type="term" value="P:negative regulation of cell adhesion"/>
    <property type="evidence" value="ECO:0000314"/>
    <property type="project" value="UniProtKB"/>
</dbReference>
<dbReference type="GO" id="GO:0010629">
    <property type="term" value="P:negative regulation of gene expression"/>
    <property type="evidence" value="ECO:0000315"/>
    <property type="project" value="ARUK-UCL"/>
</dbReference>
<dbReference type="GO" id="GO:0007219">
    <property type="term" value="P:Notch signaling pathway"/>
    <property type="evidence" value="ECO:0000250"/>
    <property type="project" value="UniProtKB"/>
</dbReference>
<dbReference type="GO" id="GO:0046931">
    <property type="term" value="P:pore complex assembly"/>
    <property type="evidence" value="ECO:0000315"/>
    <property type="project" value="UniProtKB"/>
</dbReference>
<dbReference type="GO" id="GO:0030307">
    <property type="term" value="P:positive regulation of cell growth"/>
    <property type="evidence" value="ECO:0000315"/>
    <property type="project" value="BHF-UCL"/>
</dbReference>
<dbReference type="GO" id="GO:0030335">
    <property type="term" value="P:positive regulation of cell migration"/>
    <property type="evidence" value="ECO:0000315"/>
    <property type="project" value="BHF-UCL"/>
</dbReference>
<dbReference type="GO" id="GO:0008284">
    <property type="term" value="P:positive regulation of cell population proliferation"/>
    <property type="evidence" value="ECO:0000315"/>
    <property type="project" value="BHF-UCL"/>
</dbReference>
<dbReference type="GO" id="GO:0010820">
    <property type="term" value="P:positive regulation of T cell chemotaxis"/>
    <property type="evidence" value="ECO:0000315"/>
    <property type="project" value="BHF-UCL"/>
</dbReference>
<dbReference type="GO" id="GO:0032760">
    <property type="term" value="P:positive regulation of tumor necrosis factor production"/>
    <property type="evidence" value="ECO:0000314"/>
    <property type="project" value="ARUK-UCL"/>
</dbReference>
<dbReference type="GO" id="GO:1903265">
    <property type="term" value="P:positive regulation of tumor necrosis factor-mediated signaling pathway"/>
    <property type="evidence" value="ECO:0000314"/>
    <property type="project" value="ARUK-UCL"/>
</dbReference>
<dbReference type="GO" id="GO:0099173">
    <property type="term" value="P:postsynapse organization"/>
    <property type="evidence" value="ECO:0007669"/>
    <property type="project" value="Ensembl"/>
</dbReference>
<dbReference type="GO" id="GO:0140249">
    <property type="term" value="P:protein catabolic process at postsynapse"/>
    <property type="evidence" value="ECO:0007669"/>
    <property type="project" value="Ensembl"/>
</dbReference>
<dbReference type="GO" id="GO:0006468">
    <property type="term" value="P:protein phosphorylation"/>
    <property type="evidence" value="ECO:0000250"/>
    <property type="project" value="UniProtKB"/>
</dbReference>
<dbReference type="GO" id="GO:0016485">
    <property type="term" value="P:protein processing"/>
    <property type="evidence" value="ECO:0000250"/>
    <property type="project" value="ARUK-UCL"/>
</dbReference>
<dbReference type="GO" id="GO:0098696">
    <property type="term" value="P:regulation of neurotransmitter receptor localization to postsynaptic specialization membrane"/>
    <property type="evidence" value="ECO:0007669"/>
    <property type="project" value="Ensembl"/>
</dbReference>
<dbReference type="GO" id="GO:0008593">
    <property type="term" value="P:regulation of Notch signaling pathway"/>
    <property type="evidence" value="ECO:0007669"/>
    <property type="project" value="Ensembl"/>
</dbReference>
<dbReference type="GO" id="GO:0099175">
    <property type="term" value="P:regulation of postsynapse organization"/>
    <property type="evidence" value="ECO:0007669"/>
    <property type="project" value="Ensembl"/>
</dbReference>
<dbReference type="GO" id="GO:1901342">
    <property type="term" value="P:regulation of vasculature development"/>
    <property type="evidence" value="ECO:0007669"/>
    <property type="project" value="Ensembl"/>
</dbReference>
<dbReference type="GO" id="GO:0034612">
    <property type="term" value="P:response to tumor necrosis factor"/>
    <property type="evidence" value="ECO:0000314"/>
    <property type="project" value="BHF-UCL"/>
</dbReference>
<dbReference type="CDD" id="cd04270">
    <property type="entry name" value="ZnMc_TACE_like"/>
    <property type="match status" value="1"/>
</dbReference>
<dbReference type="DisProt" id="DP02318"/>
<dbReference type="FunFam" id="3.40.390.10:FF:000011">
    <property type="entry name" value="Disintegrin and metalloproteinase domain-containing protein 10"/>
    <property type="match status" value="1"/>
</dbReference>
<dbReference type="FunFam" id="4.10.70.10:FF:000002">
    <property type="entry name" value="disintegrin and metalloproteinase domain-containing protein 10"/>
    <property type="match status" value="1"/>
</dbReference>
<dbReference type="Gene3D" id="3.40.390.10">
    <property type="entry name" value="Collagenase (Catalytic Domain)"/>
    <property type="match status" value="1"/>
</dbReference>
<dbReference type="Gene3D" id="4.10.70.10">
    <property type="entry name" value="Disintegrin domain"/>
    <property type="match status" value="1"/>
</dbReference>
<dbReference type="InterPro" id="IPR034025">
    <property type="entry name" value="ADAM10_ADAM17"/>
</dbReference>
<dbReference type="InterPro" id="IPR049038">
    <property type="entry name" value="ADAM10_Cys-rich"/>
</dbReference>
<dbReference type="InterPro" id="IPR051489">
    <property type="entry name" value="ADAM_Metalloproteinase"/>
</dbReference>
<dbReference type="InterPro" id="IPR001762">
    <property type="entry name" value="Disintegrin_dom"/>
</dbReference>
<dbReference type="InterPro" id="IPR036436">
    <property type="entry name" value="Disintegrin_dom_sf"/>
</dbReference>
<dbReference type="InterPro" id="IPR024079">
    <property type="entry name" value="MetalloPept_cat_dom_sf"/>
</dbReference>
<dbReference type="InterPro" id="IPR001590">
    <property type="entry name" value="Peptidase_M12B"/>
</dbReference>
<dbReference type="PANTHER" id="PTHR45702">
    <property type="entry name" value="ADAM10/ADAM17 METALLOPEPTIDASE FAMILY MEMBER"/>
    <property type="match status" value="1"/>
</dbReference>
<dbReference type="PANTHER" id="PTHR45702:SF4">
    <property type="entry name" value="DISINTEGRIN AND METALLOPROTEINASE DOMAIN-CONTAINING PROTEIN 10"/>
    <property type="match status" value="1"/>
</dbReference>
<dbReference type="Pfam" id="PF21299">
    <property type="entry name" value="ADAM10_Cys-rich"/>
    <property type="match status" value="1"/>
</dbReference>
<dbReference type="Pfam" id="PF00200">
    <property type="entry name" value="Disintegrin"/>
    <property type="match status" value="1"/>
</dbReference>
<dbReference type="Pfam" id="PF13574">
    <property type="entry name" value="Reprolysin_2"/>
    <property type="match status" value="1"/>
</dbReference>
<dbReference type="SMART" id="SM00050">
    <property type="entry name" value="DISIN"/>
    <property type="match status" value="1"/>
</dbReference>
<dbReference type="SUPFAM" id="SSF57552">
    <property type="entry name" value="Blood coagulation inhibitor (disintegrin)"/>
    <property type="match status" value="1"/>
</dbReference>
<dbReference type="SUPFAM" id="SSF55486">
    <property type="entry name" value="Metalloproteases ('zincins'), catalytic domain"/>
    <property type="match status" value="1"/>
</dbReference>
<dbReference type="PROSITE" id="PS50215">
    <property type="entry name" value="ADAM_MEPRO"/>
    <property type="match status" value="1"/>
</dbReference>
<dbReference type="PROSITE" id="PS50214">
    <property type="entry name" value="DISINTEGRIN_2"/>
    <property type="match status" value="1"/>
</dbReference>
<dbReference type="PROSITE" id="PS00142">
    <property type="entry name" value="ZINC_PROTEASE"/>
    <property type="match status" value="1"/>
</dbReference>
<keyword id="KW-0002">3D-structure</keyword>
<keyword id="KW-0025">Alternative splicing</keyword>
<keyword id="KW-0026">Alzheimer disease</keyword>
<keyword id="KW-1008">Amyloidosis</keyword>
<keyword id="KW-0965">Cell junction</keyword>
<keyword id="KW-1003">Cell membrane</keyword>
<keyword id="KW-0966">Cell projection</keyword>
<keyword id="KW-0165">Cleavage on pair of basic residues</keyword>
<keyword id="KW-0963">Cytoplasm</keyword>
<keyword id="KW-0968">Cytoplasmic vesicle</keyword>
<keyword id="KW-0903">Direct protein sequencing</keyword>
<keyword id="KW-0225">Disease variant</keyword>
<keyword id="KW-1015">Disulfide bond</keyword>
<keyword id="KW-0325">Glycoprotein</keyword>
<keyword id="KW-0333">Golgi apparatus</keyword>
<keyword id="KW-0378">Hydrolase</keyword>
<keyword id="KW-0472">Membrane</keyword>
<keyword id="KW-0479">Metal-binding</keyword>
<keyword id="KW-0482">Metalloprotease</keyword>
<keyword id="KW-0523">Neurodegeneration</keyword>
<keyword id="KW-0914">Notch signaling pathway</keyword>
<keyword id="KW-0597">Phosphoprotein</keyword>
<keyword id="KW-0645">Protease</keyword>
<keyword id="KW-1267">Proteomics identification</keyword>
<keyword id="KW-1185">Reference proteome</keyword>
<keyword id="KW-0729">SH3-binding</keyword>
<keyword id="KW-0732">Signal</keyword>
<keyword id="KW-0812">Transmembrane</keyword>
<keyword id="KW-1133">Transmembrane helix</keyword>
<keyword id="KW-0862">Zinc</keyword>
<keyword id="KW-0865">Zymogen</keyword>